<organism>
    <name type="scientific">Homo sapiens</name>
    <name type="common">Human</name>
    <dbReference type="NCBI Taxonomy" id="9606"/>
    <lineage>
        <taxon>Eukaryota</taxon>
        <taxon>Metazoa</taxon>
        <taxon>Chordata</taxon>
        <taxon>Craniata</taxon>
        <taxon>Vertebrata</taxon>
        <taxon>Euteleostomi</taxon>
        <taxon>Mammalia</taxon>
        <taxon>Eutheria</taxon>
        <taxon>Euarchontoglires</taxon>
        <taxon>Primates</taxon>
        <taxon>Haplorrhini</taxon>
        <taxon>Catarrhini</taxon>
        <taxon>Hominidae</taxon>
        <taxon>Homo</taxon>
    </lineage>
</organism>
<name>TOP1_HUMAN</name>
<sequence length="765" mass="90726">MSGDHLHNDSQIEADFRLNDSHKHKDKHKDREHRHKEHKKEKDREKSKHSNSEHKDSEKKHKEKEKTKHKDGSSEKHKDKHKDRDKEKRKEEKVRASGDAKIKKEKENGFSSPPQIKDEPEDDGYFVPPKEDIKPLKRPRDEDDADYKPKKIKTEDTKKEKKRKLEEEEDGKLKKPKNKDKDKKVPEPDNKKKKPKKEEEQKWKWWEEERYPEGIKWKFLEHKGPVFAPPYEPLPENVKFYYDGKVMKLSPKAEEVATFFAKMLDHEYTTKEIFRKNFFKDWRKEMTNEEKNIITNLSKCDFTQMSQYFKAQTEARKQMSKEEKLKIKEENEKLLKEYGFCIMDNHKERIANFKIEPPGLFRGRGNHPKMGMLKRRIMPEDIIINCSKDAKVPSPPPGHKWKEVRHDNKVTWLVSWTENIQGSIKYIMLNPSSRIKGEKDWQKYETARRLKKCVDKIRNQYREDWKSKEMKVRQRAVALYFIDKLALRAGNEKEEGETADTVGCCSLRVEHINLHPELDGQEYVVEFDFLGKDSIRYYNKVPVEKRVFKNLQLFMENKQPEDDLFDRLNTGILNKHLQDLMEGLTAKVFRTYNASITLQQQLKELTAPDENIPAKILSYNRANRAVAILCNHQRAPPKTFEKSMMNLQTKIDAKKEQLADARRDLKSAKADAKVMKDAKTKKVVESKKKAVQRLEEQLMKLEVQATDREENKQIALGTSKLNYLDPRITVAWCKKWGVPIEKIYNKTQREKFAWAIDMADEDYEF</sequence>
<reference key="1">
    <citation type="journal article" date="1988" name="Proc. Natl. Acad. Sci. U.S.A.">
        <title>cDNA cloning of human DNA topoisomerase I: catalytic activity of a 67.7-kDa carboxyl-terminal fragment.</title>
        <authorList>
            <person name="D'Arpa P."/>
            <person name="Machlin P.S."/>
            <person name="Ratrie H. III"/>
            <person name="Rothfield N.F."/>
            <person name="Cleveland D.W."/>
            <person name="Earnshaw W.C."/>
        </authorList>
    </citation>
    <scope>NUCLEOTIDE SEQUENCE [MRNA]</scope>
    <scope>FUNCTION</scope>
    <scope>CATALYTIC ACTIVITY</scope>
</reference>
<reference key="2">
    <citation type="journal article" date="1991" name="J. Biol. Chem.">
        <title>Structure of the human type I DNA topoisomerase gene.</title>
        <authorList>
            <person name="Kunze N."/>
            <person name="Yang G."/>
            <person name="Dolberg M."/>
            <person name="Sundarp R."/>
            <person name="Knippers R."/>
            <person name="Richter A."/>
        </authorList>
    </citation>
    <scope>NUCLEOTIDE SEQUENCE [GENOMIC DNA]</scope>
</reference>
<reference key="3">
    <citation type="journal article" date="2004" name="Nat. Genet.">
        <title>Complete sequencing and characterization of 21,243 full-length human cDNAs.</title>
        <authorList>
            <person name="Ota T."/>
            <person name="Suzuki Y."/>
            <person name="Nishikawa T."/>
            <person name="Otsuki T."/>
            <person name="Sugiyama T."/>
            <person name="Irie R."/>
            <person name="Wakamatsu A."/>
            <person name="Hayashi K."/>
            <person name="Sato H."/>
            <person name="Nagai K."/>
            <person name="Kimura K."/>
            <person name="Makita H."/>
            <person name="Sekine M."/>
            <person name="Obayashi M."/>
            <person name="Nishi T."/>
            <person name="Shibahara T."/>
            <person name="Tanaka T."/>
            <person name="Ishii S."/>
            <person name="Yamamoto J."/>
            <person name="Saito K."/>
            <person name="Kawai Y."/>
            <person name="Isono Y."/>
            <person name="Nakamura Y."/>
            <person name="Nagahari K."/>
            <person name="Murakami K."/>
            <person name="Yasuda T."/>
            <person name="Iwayanagi T."/>
            <person name="Wagatsuma M."/>
            <person name="Shiratori A."/>
            <person name="Sudo H."/>
            <person name="Hosoiri T."/>
            <person name="Kaku Y."/>
            <person name="Kodaira H."/>
            <person name="Kondo H."/>
            <person name="Sugawara M."/>
            <person name="Takahashi M."/>
            <person name="Kanda K."/>
            <person name="Yokoi T."/>
            <person name="Furuya T."/>
            <person name="Kikkawa E."/>
            <person name="Omura Y."/>
            <person name="Abe K."/>
            <person name="Kamihara K."/>
            <person name="Katsuta N."/>
            <person name="Sato K."/>
            <person name="Tanikawa M."/>
            <person name="Yamazaki M."/>
            <person name="Ninomiya K."/>
            <person name="Ishibashi T."/>
            <person name="Yamashita H."/>
            <person name="Murakawa K."/>
            <person name="Fujimori K."/>
            <person name="Tanai H."/>
            <person name="Kimata M."/>
            <person name="Watanabe M."/>
            <person name="Hiraoka S."/>
            <person name="Chiba Y."/>
            <person name="Ishida S."/>
            <person name="Ono Y."/>
            <person name="Takiguchi S."/>
            <person name="Watanabe S."/>
            <person name="Yosida M."/>
            <person name="Hotuta T."/>
            <person name="Kusano J."/>
            <person name="Kanehori K."/>
            <person name="Takahashi-Fujii A."/>
            <person name="Hara H."/>
            <person name="Tanase T.-O."/>
            <person name="Nomura Y."/>
            <person name="Togiya S."/>
            <person name="Komai F."/>
            <person name="Hara R."/>
            <person name="Takeuchi K."/>
            <person name="Arita M."/>
            <person name="Imose N."/>
            <person name="Musashino K."/>
            <person name="Yuuki H."/>
            <person name="Oshima A."/>
            <person name="Sasaki N."/>
            <person name="Aotsuka S."/>
            <person name="Yoshikawa Y."/>
            <person name="Matsunawa H."/>
            <person name="Ichihara T."/>
            <person name="Shiohata N."/>
            <person name="Sano S."/>
            <person name="Moriya S."/>
            <person name="Momiyama H."/>
            <person name="Satoh N."/>
            <person name="Takami S."/>
            <person name="Terashima Y."/>
            <person name="Suzuki O."/>
            <person name="Nakagawa S."/>
            <person name="Senoh A."/>
            <person name="Mizoguchi H."/>
            <person name="Goto Y."/>
            <person name="Shimizu F."/>
            <person name="Wakebe H."/>
            <person name="Hishigaki H."/>
            <person name="Watanabe T."/>
            <person name="Sugiyama A."/>
            <person name="Takemoto M."/>
            <person name="Kawakami B."/>
            <person name="Yamazaki M."/>
            <person name="Watanabe K."/>
            <person name="Kumagai A."/>
            <person name="Itakura S."/>
            <person name="Fukuzumi Y."/>
            <person name="Fujimori Y."/>
            <person name="Komiyama M."/>
            <person name="Tashiro H."/>
            <person name="Tanigami A."/>
            <person name="Fujiwara T."/>
            <person name="Ono T."/>
            <person name="Yamada K."/>
            <person name="Fujii Y."/>
            <person name="Ozaki K."/>
            <person name="Hirao M."/>
            <person name="Ohmori Y."/>
            <person name="Kawabata A."/>
            <person name="Hikiji T."/>
            <person name="Kobatake N."/>
            <person name="Inagaki H."/>
            <person name="Ikema Y."/>
            <person name="Okamoto S."/>
            <person name="Okitani R."/>
            <person name="Kawakami T."/>
            <person name="Noguchi S."/>
            <person name="Itoh T."/>
            <person name="Shigeta K."/>
            <person name="Senba T."/>
            <person name="Matsumura K."/>
            <person name="Nakajima Y."/>
            <person name="Mizuno T."/>
            <person name="Morinaga M."/>
            <person name="Sasaki M."/>
            <person name="Togashi T."/>
            <person name="Oyama M."/>
            <person name="Hata H."/>
            <person name="Watanabe M."/>
            <person name="Komatsu T."/>
            <person name="Mizushima-Sugano J."/>
            <person name="Satoh T."/>
            <person name="Shirai Y."/>
            <person name="Takahashi Y."/>
            <person name="Nakagawa K."/>
            <person name="Okumura K."/>
            <person name="Nagase T."/>
            <person name="Nomura N."/>
            <person name="Kikuchi H."/>
            <person name="Masuho Y."/>
            <person name="Yamashita R."/>
            <person name="Nakai K."/>
            <person name="Yada T."/>
            <person name="Nakamura Y."/>
            <person name="Ohara O."/>
            <person name="Isogai T."/>
            <person name="Sugano S."/>
        </authorList>
    </citation>
    <scope>NUCLEOTIDE SEQUENCE [LARGE SCALE MRNA]</scope>
    <source>
        <tissue>Trachea</tissue>
    </source>
</reference>
<reference key="4">
    <citation type="journal article" date="2001" name="Nature">
        <title>The DNA sequence and comparative analysis of human chromosome 20.</title>
        <authorList>
            <person name="Deloukas P."/>
            <person name="Matthews L.H."/>
            <person name="Ashurst J.L."/>
            <person name="Burton J."/>
            <person name="Gilbert J.G.R."/>
            <person name="Jones M."/>
            <person name="Stavrides G."/>
            <person name="Almeida J.P."/>
            <person name="Babbage A.K."/>
            <person name="Bagguley C.L."/>
            <person name="Bailey J."/>
            <person name="Barlow K.F."/>
            <person name="Bates K.N."/>
            <person name="Beard L.M."/>
            <person name="Beare D.M."/>
            <person name="Beasley O.P."/>
            <person name="Bird C.P."/>
            <person name="Blakey S.E."/>
            <person name="Bridgeman A.M."/>
            <person name="Brown A.J."/>
            <person name="Buck D."/>
            <person name="Burrill W.D."/>
            <person name="Butler A.P."/>
            <person name="Carder C."/>
            <person name="Carter N.P."/>
            <person name="Chapman J.C."/>
            <person name="Clamp M."/>
            <person name="Clark G."/>
            <person name="Clark L.N."/>
            <person name="Clark S.Y."/>
            <person name="Clee C.M."/>
            <person name="Clegg S."/>
            <person name="Cobley V.E."/>
            <person name="Collier R.E."/>
            <person name="Connor R.E."/>
            <person name="Corby N.R."/>
            <person name="Coulson A."/>
            <person name="Coville G.J."/>
            <person name="Deadman R."/>
            <person name="Dhami P.D."/>
            <person name="Dunn M."/>
            <person name="Ellington A.G."/>
            <person name="Frankland J.A."/>
            <person name="Fraser A."/>
            <person name="French L."/>
            <person name="Garner P."/>
            <person name="Grafham D.V."/>
            <person name="Griffiths C."/>
            <person name="Griffiths M.N.D."/>
            <person name="Gwilliam R."/>
            <person name="Hall R.E."/>
            <person name="Hammond S."/>
            <person name="Harley J.L."/>
            <person name="Heath P.D."/>
            <person name="Ho S."/>
            <person name="Holden J.L."/>
            <person name="Howden P.J."/>
            <person name="Huckle E."/>
            <person name="Hunt A.R."/>
            <person name="Hunt S.E."/>
            <person name="Jekosch K."/>
            <person name="Johnson C.M."/>
            <person name="Johnson D."/>
            <person name="Kay M.P."/>
            <person name="Kimberley A.M."/>
            <person name="King A."/>
            <person name="Knights A."/>
            <person name="Laird G.K."/>
            <person name="Lawlor S."/>
            <person name="Lehvaeslaiho M.H."/>
            <person name="Leversha M.A."/>
            <person name="Lloyd C."/>
            <person name="Lloyd D.M."/>
            <person name="Lovell J.D."/>
            <person name="Marsh V.L."/>
            <person name="Martin S.L."/>
            <person name="McConnachie L.J."/>
            <person name="McLay K."/>
            <person name="McMurray A.A."/>
            <person name="Milne S.A."/>
            <person name="Mistry D."/>
            <person name="Moore M.J.F."/>
            <person name="Mullikin J.C."/>
            <person name="Nickerson T."/>
            <person name="Oliver K."/>
            <person name="Parker A."/>
            <person name="Patel R."/>
            <person name="Pearce T.A.V."/>
            <person name="Peck A.I."/>
            <person name="Phillimore B.J.C.T."/>
            <person name="Prathalingam S.R."/>
            <person name="Plumb R.W."/>
            <person name="Ramsay H."/>
            <person name="Rice C.M."/>
            <person name="Ross M.T."/>
            <person name="Scott C.E."/>
            <person name="Sehra H.K."/>
            <person name="Shownkeen R."/>
            <person name="Sims S."/>
            <person name="Skuce C.D."/>
            <person name="Smith M.L."/>
            <person name="Soderlund C."/>
            <person name="Steward C.A."/>
            <person name="Sulston J.E."/>
            <person name="Swann R.M."/>
            <person name="Sycamore N."/>
            <person name="Taylor R."/>
            <person name="Tee L."/>
            <person name="Thomas D.W."/>
            <person name="Thorpe A."/>
            <person name="Tracey A."/>
            <person name="Tromans A.C."/>
            <person name="Vaudin M."/>
            <person name="Wall M."/>
            <person name="Wallis J.M."/>
            <person name="Whitehead S.L."/>
            <person name="Whittaker P."/>
            <person name="Willey D.L."/>
            <person name="Williams L."/>
            <person name="Williams S.A."/>
            <person name="Wilming L."/>
            <person name="Wray P.W."/>
            <person name="Hubbard T."/>
            <person name="Durbin R.M."/>
            <person name="Bentley D.R."/>
            <person name="Beck S."/>
            <person name="Rogers J."/>
        </authorList>
    </citation>
    <scope>NUCLEOTIDE SEQUENCE [LARGE SCALE GENOMIC DNA]</scope>
</reference>
<reference key="5">
    <citation type="submission" date="2005-09" db="EMBL/GenBank/DDBJ databases">
        <authorList>
            <person name="Mural R.J."/>
            <person name="Istrail S."/>
            <person name="Sutton G.G."/>
            <person name="Florea L."/>
            <person name="Halpern A.L."/>
            <person name="Mobarry C.M."/>
            <person name="Lippert R."/>
            <person name="Walenz B."/>
            <person name="Shatkay H."/>
            <person name="Dew I."/>
            <person name="Miller J.R."/>
            <person name="Flanigan M.J."/>
            <person name="Edwards N.J."/>
            <person name="Bolanos R."/>
            <person name="Fasulo D."/>
            <person name="Halldorsson B.V."/>
            <person name="Hannenhalli S."/>
            <person name="Turner R."/>
            <person name="Yooseph S."/>
            <person name="Lu F."/>
            <person name="Nusskern D.R."/>
            <person name="Shue B.C."/>
            <person name="Zheng X.H."/>
            <person name="Zhong F."/>
            <person name="Delcher A.L."/>
            <person name="Huson D.H."/>
            <person name="Kravitz S.A."/>
            <person name="Mouchard L."/>
            <person name="Reinert K."/>
            <person name="Remington K.A."/>
            <person name="Clark A.G."/>
            <person name="Waterman M.S."/>
            <person name="Eichler E.E."/>
            <person name="Adams M.D."/>
            <person name="Hunkapiller M.W."/>
            <person name="Myers E.W."/>
            <person name="Venter J.C."/>
        </authorList>
    </citation>
    <scope>NUCLEOTIDE SEQUENCE [LARGE SCALE GENOMIC DNA]</scope>
</reference>
<reference key="6">
    <citation type="journal article" date="1990" name="Eur. J. Biochem.">
        <title>Structural characterisation of the human DNA topoisomerase I gene promoter.</title>
        <authorList>
            <person name="Kunze N."/>
            <person name="Klein M."/>
            <person name="Richter A."/>
            <person name="Knippers R."/>
        </authorList>
    </citation>
    <scope>NUCLEOTIDE SEQUENCE [GENOMIC DNA] OF 1-14</scope>
</reference>
<reference key="7">
    <citation type="submission" date="2008-12" db="UniProtKB">
        <authorList>
            <person name="Bienvenut W.V."/>
            <person name="Lilla S."/>
            <person name="von Kriegsheim A."/>
            <person name="Lempens A."/>
            <person name="Kolch W."/>
        </authorList>
    </citation>
    <scope>PROTEIN SEQUENCE OF 2-17; 107-117; 224-239; 253-262; 292-299; 355-362; 426-434; 476-484; 509-532; 550-587; 591-615; 625-634; 656-663; 694-712; 721-734 AND 736-742</scope>
    <scope>CLEAVAGE OF INITIATOR METHIONINE</scope>
    <scope>ACETYLATION AT SER-2</scope>
    <scope>IDENTIFICATION BY MASS SPECTROMETRY</scope>
    <source>
        <tissue>Ovarian carcinoma</tissue>
    </source>
</reference>
<reference key="8">
    <citation type="journal article" date="1995" name="Cancer Res.">
        <title>Mutation at the catalytic site of topoisomerase I in CEM/C2, a human leukemia cell line resistant to camptothecin.</title>
        <authorList>
            <person name="Fujimori A."/>
            <person name="Harker W.G."/>
            <person name="Kohlhagen G."/>
            <person name="Hoki Y."/>
            <person name="Pommier Y."/>
        </authorList>
    </citation>
    <scope>NUCLEOTIDE SEQUENCE [MRNA] OF 5-765</scope>
    <scope>VARIANTS CPT-RESISTANT LEUKEMIA THR-370 AND SER-722</scope>
    <source>
        <tissue>Peripheral blood</tissue>
    </source>
</reference>
<reference key="9">
    <citation type="journal article" date="1988" name="Eur. J. Biochem.">
        <title>Monoclonal antibodies neutralizing mammalian DNA topoisomerase I activity.</title>
        <authorList>
            <person name="Oddou P."/>
            <person name="Schmidt U."/>
            <person name="Knippers R."/>
            <person name="Richter A."/>
        </authorList>
    </citation>
    <scope>NUCLEOTIDE SEQUENCE [MRNA] OF 344-765</scope>
</reference>
<reference key="10">
    <citation type="journal article" date="1989" name="Cancer Res.">
        <title>Characterization of the 3' region of the human DNA topoisomerase I gene.</title>
        <authorList>
            <person name="Zhou B.S."/>
            <person name="Bastow K.F."/>
            <person name="Cheng Y.C."/>
        </authorList>
    </citation>
    <scope>NUCLEOTIDE SEQUENCE [MRNA] OF 541-765</scope>
</reference>
<reference key="11">
    <citation type="journal article" date="1989" name="Proc. Natl. Acad. Sci. U.S.A.">
        <title>Determination of an epitope of the diffuse systemic sclerosis marker antigen DNA topoisomerase I: sequence similarity with retroviral p30gag protein suggests a possible cause for autoimmunity in systemic sclerosis.</title>
        <authorList>
            <person name="Maul G.G."/>
            <person name="Jimenez S.A."/>
            <person name="Riggs E."/>
            <person name="Ziemnicka-Kotula D."/>
        </authorList>
    </citation>
    <scope>NUCLEOTIDE SEQUENCE [MRNA] OF 657-765</scope>
</reference>
<reference key="12">
    <citation type="journal article" date="1999" name="Blood">
        <title>The t(11;20)(p15;q11) chromosomal translocation associated with therapy-related myelodysplastic syndrome results in an NUP98-TOP1 fusion.</title>
        <authorList>
            <person name="Ahuja H.G."/>
            <person name="Felix C.A."/>
            <person name="Aplan P.D."/>
        </authorList>
    </citation>
    <scope>CHROMOSOMAL TRANSLOCATION WITH NUP98</scope>
</reference>
<reference key="13">
    <citation type="journal article" date="2002" name="J. Biol. Chem.">
        <title>Sumoylation of topoisomerase I is involved in its partitioning between nucleoli and nucleoplasm and its clearing from nucleoli in response to camptothecin.</title>
        <authorList>
            <person name="Rallabhandi P."/>
            <person name="Hashimoto K."/>
            <person name="Mo Y.-Y."/>
            <person name="Beck W.T."/>
            <person name="Moitra P.K."/>
            <person name="D'Arpa P."/>
        </authorList>
    </citation>
    <scope>SUMOYLATION AT LYS-117</scope>
    <scope>SUBCELLULAR LOCATION</scope>
    <scope>MUTAGENESIS OF LYS-103; LYS-117; LYS-153 AND TYR-723</scope>
</reference>
<reference key="14">
    <citation type="journal article" date="2006" name="Cell">
        <title>Global, in vivo, and site-specific phosphorylation dynamics in signaling networks.</title>
        <authorList>
            <person name="Olsen J.V."/>
            <person name="Blagoev B."/>
            <person name="Gnad F."/>
            <person name="Macek B."/>
            <person name="Kumar C."/>
            <person name="Mortensen P."/>
            <person name="Mann M."/>
        </authorList>
    </citation>
    <scope>IDENTIFICATION BY MASS SPECTROMETRY [LARGE SCALE ANALYSIS]</scope>
    <source>
        <tissue>Cervix carcinoma</tissue>
    </source>
</reference>
<reference key="15">
    <citation type="journal article" date="2008" name="J. Virol.">
        <title>Simian virus 40 DNA replication is dependent on an interaction between topoisomerase I and the C-terminal end of T antigen.</title>
        <authorList>
            <person name="Khopde S."/>
            <person name="Simmons D.T."/>
        </authorList>
    </citation>
    <scope>INTERACTION WITH SV40 LARGE T ANTIGEN (MICROBIAL INFECTION)</scope>
</reference>
<reference key="16">
    <citation type="journal article" date="2008" name="Proc. Natl. Acad. Sci. U.S.A.">
        <title>A quantitative atlas of mitotic phosphorylation.</title>
        <authorList>
            <person name="Dephoure N."/>
            <person name="Zhou C."/>
            <person name="Villen J."/>
            <person name="Beausoleil S.A."/>
            <person name="Bakalarski C.E."/>
            <person name="Elledge S.J."/>
            <person name="Gygi S.P."/>
        </authorList>
    </citation>
    <scope>IDENTIFICATION BY MASS SPECTROMETRY [LARGE SCALE ANALYSIS]</scope>
    <source>
        <tissue>Cervix carcinoma</tissue>
    </source>
</reference>
<reference key="17">
    <citation type="journal article" date="2009" name="Anal. Chem.">
        <title>Lys-N and trypsin cover complementary parts of the phosphoproteome in a refined SCX-based approach.</title>
        <authorList>
            <person name="Gauci S."/>
            <person name="Helbig A.O."/>
            <person name="Slijper M."/>
            <person name="Krijgsveld J."/>
            <person name="Heck A.J."/>
            <person name="Mohammed S."/>
        </authorList>
    </citation>
    <scope>IDENTIFICATION BY MASS SPECTROMETRY [LARGE SCALE ANALYSIS]</scope>
</reference>
<reference key="18">
    <citation type="journal article" date="2009" name="Circ. Res.">
        <title>Cdc2-like kinases and DNA topoisomerase I regulate alternative splicing of tissue factor in human endothelial cells.</title>
        <authorList>
            <person name="Eisenreich A."/>
            <person name="Bogdanov V.Y."/>
            <person name="Zakrzewicz A."/>
            <person name="Pries A."/>
            <person name="Antoniak S."/>
            <person name="Poller W."/>
            <person name="Schultheiss H.P."/>
            <person name="Rauch U."/>
        </authorList>
    </citation>
    <scope>FUNCTION</scope>
    <scope>TISSUE SPECIFICITY</scope>
</reference>
<reference key="19">
    <citation type="journal article" date="2009" name="Science">
        <title>Lysine acetylation targets protein complexes and co-regulates major cellular functions.</title>
        <authorList>
            <person name="Choudhary C."/>
            <person name="Kumar C."/>
            <person name="Gnad F."/>
            <person name="Nielsen M.L."/>
            <person name="Rehman M."/>
            <person name="Walther T.C."/>
            <person name="Olsen J.V."/>
            <person name="Mann M."/>
        </authorList>
    </citation>
    <scope>ACETYLATION [LARGE SCALE ANALYSIS] AT LYS-280</scope>
    <scope>IDENTIFICATION BY MASS SPECTROMETRY [LARGE SCALE ANALYSIS]</scope>
</reference>
<reference key="20">
    <citation type="journal article" date="2010" name="Sci. Signal.">
        <title>Quantitative phosphoproteomics reveals widespread full phosphorylation site occupancy during mitosis.</title>
        <authorList>
            <person name="Olsen J.V."/>
            <person name="Vermeulen M."/>
            <person name="Santamaria A."/>
            <person name="Kumar C."/>
            <person name="Miller M.L."/>
            <person name="Jensen L.J."/>
            <person name="Gnad F."/>
            <person name="Cox J."/>
            <person name="Jensen T.S."/>
            <person name="Nigg E.A."/>
            <person name="Brunak S."/>
            <person name="Mann M."/>
        </authorList>
    </citation>
    <scope>ACETYLATION [LARGE SCALE ANALYSIS] AT SER-2</scope>
    <scope>PHOSPHORYLATION [LARGE SCALE ANALYSIS] AT SER-10; SER-57 AND SER-112</scope>
    <scope>CLEAVAGE OF INITIATOR METHIONINE [LARGE SCALE ANALYSIS]</scope>
    <scope>IDENTIFICATION BY MASS SPECTROMETRY [LARGE SCALE ANALYSIS]</scope>
    <source>
        <tissue>Cervix carcinoma</tissue>
    </source>
</reference>
<reference key="21">
    <citation type="journal article" date="2011" name="BMC Syst. Biol.">
        <title>Initial characterization of the human central proteome.</title>
        <authorList>
            <person name="Burkard T.R."/>
            <person name="Planyavsky M."/>
            <person name="Kaupe I."/>
            <person name="Breitwieser F.P."/>
            <person name="Buerckstuemmer T."/>
            <person name="Bennett K.L."/>
            <person name="Superti-Furga G."/>
            <person name="Colinge J."/>
        </authorList>
    </citation>
    <scope>IDENTIFICATION BY MASS SPECTROMETRY [LARGE SCALE ANALYSIS]</scope>
</reference>
<reference key="22">
    <citation type="journal article" date="2011" name="Sci. Signal.">
        <title>System-wide temporal characterization of the proteome and phosphoproteome of human embryonic stem cell differentiation.</title>
        <authorList>
            <person name="Rigbolt K.T."/>
            <person name="Prokhorova T.A."/>
            <person name="Akimov V."/>
            <person name="Henningsen J."/>
            <person name="Johansen P.T."/>
            <person name="Kratchmarova I."/>
            <person name="Kassem M."/>
            <person name="Mann M."/>
            <person name="Olsen J.V."/>
            <person name="Blagoev B."/>
        </authorList>
    </citation>
    <scope>ACETYLATION [LARGE SCALE ANALYSIS] AT SER-2</scope>
    <scope>PHOSPHORYLATION [LARGE SCALE ANALYSIS] AT SER-10</scope>
    <scope>CLEAVAGE OF INITIATOR METHIONINE [LARGE SCALE ANALYSIS]</scope>
    <scope>IDENTIFICATION BY MASS SPECTROMETRY [LARGE SCALE ANALYSIS]</scope>
</reference>
<reference key="23">
    <citation type="journal article" date="2012" name="Biol. Open">
        <title>Taperin (c9orf75), a mutated gene in nonsyndromic deafness, encodes a vertebrate specific, nuclear localized protein phosphatase one alpha (PP1alpha) docking protein.</title>
        <authorList>
            <person name="Ferrar T."/>
            <person name="Chamousset D."/>
            <person name="De Wever V."/>
            <person name="Nimick M."/>
            <person name="Andersen J."/>
            <person name="Trinkle-Mulcahy L."/>
            <person name="Moorhead G.B."/>
        </authorList>
    </citation>
    <scope>INTERACTION WITH TPRN</scope>
</reference>
<reference key="24">
    <citation type="journal article" date="2012" name="Nucleic Acids Res.">
        <title>Rhythmic binding of Topoisomerase I impacts on the transcription of Bmal1 and circadian period.</title>
        <authorList>
            <person name="Onishi Y."/>
            <person name="Kawano Y."/>
        </authorList>
    </citation>
    <scope>FUNCTION</scope>
</reference>
<reference key="25">
    <citation type="journal article" date="2012" name="PLoS ONE">
        <title>CK2-mediated hyperphosphorylation of topoisomerase I targets serine 506, enhances topoisomerase I-DNA Binding, and increases cellular camptothecin sensitivity.</title>
        <authorList>
            <person name="Bandyopadhyay K."/>
            <person name="Li P."/>
            <person name="Gjerset R.A."/>
        </authorList>
    </citation>
    <scope>PHOSPHORYLATION AT SER-506</scope>
</reference>
<reference key="26">
    <citation type="journal article" date="2013" name="J. Proteome Res.">
        <title>Toward a comprehensive characterization of a human cancer cell phosphoproteome.</title>
        <authorList>
            <person name="Zhou H."/>
            <person name="Di Palma S."/>
            <person name="Preisinger C."/>
            <person name="Peng M."/>
            <person name="Polat A.N."/>
            <person name="Heck A.J."/>
            <person name="Mohammed S."/>
        </authorList>
    </citation>
    <scope>PHOSPHORYLATION [LARGE SCALE ANALYSIS] AT SER-2 AND SER-10</scope>
    <scope>IDENTIFICATION BY MASS SPECTROMETRY [LARGE SCALE ANALYSIS]</scope>
    <source>
        <tissue>Cervix carcinoma</tissue>
        <tissue>Erythroleukemia</tissue>
    </source>
</reference>
<reference key="27">
    <citation type="journal article" date="2014" name="J. Proteomics">
        <title>An enzyme assisted RP-RPLC approach for in-depth analysis of human liver phosphoproteome.</title>
        <authorList>
            <person name="Bian Y."/>
            <person name="Song C."/>
            <person name="Cheng K."/>
            <person name="Dong M."/>
            <person name="Wang F."/>
            <person name="Huang J."/>
            <person name="Sun D."/>
            <person name="Wang L."/>
            <person name="Ye M."/>
            <person name="Zou H."/>
        </authorList>
    </citation>
    <scope>IDENTIFICATION BY MASS SPECTROMETRY [LARGE SCALE ANALYSIS]</scope>
    <source>
        <tissue>Liver</tissue>
    </source>
</reference>
<reference key="28">
    <citation type="journal article" date="2014" name="Nat. Struct. Mol. Biol.">
        <title>Uncovering global SUMOylation signaling networks in a site-specific manner.</title>
        <authorList>
            <person name="Hendriks I.A."/>
            <person name="D'Souza R.C."/>
            <person name="Yang B."/>
            <person name="Verlaan-de Vries M."/>
            <person name="Mann M."/>
            <person name="Vertegaal A.C."/>
        </authorList>
    </citation>
    <scope>SUMOYLATION [LARGE SCALE ANALYSIS] AT LYS-117; LYS-134; LYS-153; LYS-158 AND LYS-164</scope>
    <scope>IDENTIFICATION BY MASS SPECTROMETRY [LARGE SCALE ANALYSIS]</scope>
</reference>
<reference key="29">
    <citation type="journal article" date="2014" name="Proc. Natl. Acad. Sci. U.S.A.">
        <title>Mapping of SUMO sites and analysis of SUMOylation changes induced by external stimuli.</title>
        <authorList>
            <person name="Impens F."/>
            <person name="Radoshevich L."/>
            <person name="Cossart P."/>
            <person name="Ribet D."/>
        </authorList>
    </citation>
    <scope>SUMOYLATION [LARGE SCALE ANALYSIS] AT LYS-117</scope>
    <scope>IDENTIFICATION BY MASS SPECTROMETRY [LARGE SCALE ANALYSIS]</scope>
</reference>
<reference key="30">
    <citation type="journal article" date="2015" name="Cell Rep.">
        <title>SUMO-2 orchestrates chromatin modifiers in response to DNA damage.</title>
        <authorList>
            <person name="Hendriks I.A."/>
            <person name="Treffers L.W."/>
            <person name="Verlaan-de Vries M."/>
            <person name="Olsen J.V."/>
            <person name="Vertegaal A.C."/>
        </authorList>
    </citation>
    <scope>SUMOYLATION [LARGE SCALE ANALYSIS] AT LYS-117; LYS-148; LYS-153 AND LYS-164</scope>
    <scope>IDENTIFICATION BY MASS SPECTROMETRY [LARGE SCALE ANALYSIS]</scope>
</reference>
<reference key="31">
    <citation type="journal article" date="2015" name="Mol. Cell. Proteomics">
        <title>System-wide analysis of SUMOylation dynamics in response to replication stress reveals novel small ubiquitin-like modified target proteins and acceptor lysines relevant for genome stability.</title>
        <authorList>
            <person name="Xiao Z."/>
            <person name="Chang J.G."/>
            <person name="Hendriks I.A."/>
            <person name="Sigurdsson J.O."/>
            <person name="Olsen J.V."/>
            <person name="Vertegaal A.C."/>
        </authorList>
    </citation>
    <scope>SUMOYLATION [LARGE SCALE ANALYSIS] AT LYS-148; LYS-153; LYS-164 AND LYS-336</scope>
    <scope>IDENTIFICATION BY MASS SPECTROMETRY [LARGE SCALE ANALYSIS]</scope>
</reference>
<reference key="32">
    <citation type="journal article" date="2015" name="PLoS ONE">
        <title>Identification of Novel Proteins Co-Purifying with Cockayne Syndrome Group B (CSB) Reveals Potential Roles for CSB in RNA Metabolism and Chromatin Dynamics.</title>
        <authorList>
            <person name="Nicolai S."/>
            <person name="Filippi S."/>
            <person name="Caputo M."/>
            <person name="Cipak L."/>
            <person name="Gregan J."/>
            <person name="Ammerer G."/>
            <person name="Frontini M."/>
            <person name="Willems D."/>
            <person name="Prantera G."/>
            <person name="Balajee A.S."/>
            <person name="Proietti-De-Santis L."/>
        </authorList>
    </citation>
    <scope>INTERACTION WITH ERCC6</scope>
</reference>
<reference key="33">
    <citation type="journal article" date="2017" name="Nat. Struct. Mol. Biol.">
        <title>Site-specific mapping of the human SUMO proteome reveals co-modification with phosphorylation.</title>
        <authorList>
            <person name="Hendriks I.A."/>
            <person name="Lyon D."/>
            <person name="Young C."/>
            <person name="Jensen L.J."/>
            <person name="Vertegaal A.C."/>
            <person name="Nielsen M.L."/>
        </authorList>
    </citation>
    <scope>SUMOYLATION [LARGE SCALE ANALYSIS] AT LYS-101; LYS-103; LYS-117; LYS-134; LYS-148; LYS-153; LYS-158; LYS-164; LYS-172; LYS-204; LYS-336; LYS-549; LYS-642; LYS-700 AND LYS-712</scope>
    <scope>IDENTIFICATION BY MASS SPECTROMETRY [LARGE SCALE ANALYSIS]</scope>
</reference>
<reference key="34">
    <citation type="journal article" date="1998" name="Science">
        <title>Crystal structures of human topoisomerase I in covalent and noncovalent complexes with DNA.</title>
        <authorList>
            <person name="Redinbo M.R."/>
            <person name="Stewart L."/>
            <person name="Kuhn P."/>
            <person name="Champoux J.J."/>
            <person name="Hol W.G.J."/>
        </authorList>
    </citation>
    <scope>X-RAY CRYSTALLOGRAPHY (2.10 ANGSTROMS) OF 175-765 IN COMPLEX WITH DNA</scope>
    <scope>ACTIVE SITE</scope>
</reference>
<reference key="35">
    <citation type="journal article" date="1998" name="Science">
        <title>A model for the mechanism of human topoisomerase I.</title>
        <authorList>
            <person name="Stewart L."/>
            <person name="Redinbo M.R."/>
            <person name="Qiu X."/>
            <person name="Hol W.G.J."/>
            <person name="Champoux J.J."/>
        </authorList>
    </citation>
    <scope>X-RAY CRYSTALLOGRAPHY (2.8 ANGSTROMS) OF 215-765 OF MUTANT PHE-723 IN COMPLEX WITH DNA</scope>
</reference>
<reference key="36">
    <citation type="journal article" date="2000" name="Biochemistry">
        <title>Novel insights into catalytic mechanism from a crystal structure of human topoisomerase I in complex with DNA.</title>
        <authorList>
            <person name="Redinbo M.R."/>
            <person name="Champoux J.J."/>
            <person name="Hol W.G.J."/>
        </authorList>
    </citation>
    <scope>X-RAY CRYSTALLOGRAPHY (2.6 ANGSTROMS) OF 203-765 IN COMPLEX WITH DNA</scope>
    <scope>ACTIVE SITE</scope>
</reference>
<reference key="37">
    <citation type="journal article" date="2002" name="Proc. Natl. Acad. Sci. U.S.A.">
        <title>8-Oxoguanine rearranges the active site of human topoisomerase I.</title>
        <authorList>
            <person name="Lesher D.T."/>
            <person name="Pommier Y."/>
            <person name="Stewart L."/>
            <person name="Redinbo M.R."/>
        </authorList>
    </citation>
    <scope>X-RAY CRYSTALLOGRAPHY (3.14 ANGSTROMS) OF 202-765 IN COMPLEX WITH DNA</scope>
</reference>
<reference key="38">
    <citation type="journal article" date="2002" name="Proc. Natl. Acad. Sci. U.S.A.">
        <title>The mechanism of topoisomerase I poisoning by a camptothecin analog.</title>
        <authorList>
            <person name="Staker B.L."/>
            <person name="Hjerrild K."/>
            <person name="Feese M.D."/>
            <person name="Behnke C.A."/>
            <person name="Burgin A.B. Jr."/>
            <person name="Stewart L."/>
        </authorList>
    </citation>
    <scope>X-RAY CRYSTALLOGRAPHY (2.10 ANGSTROMS) OF 174-765 IN COMPLEXES WITH DNA AND TOPOTECAN</scope>
    <scope>ACTIVE SITE</scope>
</reference>
<reference key="39">
    <citation type="journal article" date="2003" name="J. Biol. Chem.">
        <title>Structural impact of the leukemia drug 1-beta-D-arabinofuranosylcytosine (Ara-C) on the covalent human topoisomerase I-DNA complex.</title>
        <authorList>
            <person name="Chrencik J.E."/>
            <person name="Burgin A.B."/>
            <person name="Pommier Y."/>
            <person name="Stewart L."/>
            <person name="Redinbo M.R."/>
        </authorList>
    </citation>
    <scope>X-RAY CRYSTALLOGRAPHY (3.10 ANGSTROMS) OF 203-764 IN COMPLEX WITH DNA</scope>
    <scope>ACTIVE SITE</scope>
</reference>
<reference key="40">
    <citation type="journal article" date="2004" name="J. Biol. Chem.">
        <title>The role of lysine 532 in the catalytic mechanism of human topoisomerase I.</title>
        <authorList>
            <person name="Interthal H."/>
            <person name="Quigley P.M."/>
            <person name="Hol W.G."/>
            <person name="Champoux J.J."/>
        </authorList>
    </citation>
    <scope>X-RAY CRYSTALLOGRAPHY (3.13 ANGSTROMS) OF 174-765</scope>
    <scope>MUTAGENESIS OF LYS-532</scope>
    <scope>CATALYTIC ACTIVITY</scope>
    <scope>FUNCTION</scope>
</reference>
<reference key="41">
    <citation type="journal article" date="2004" name="J. Mol. Biol.">
        <title>Mechanisms of camptothecin resistance by human topoisomerase I mutations.</title>
        <authorList>
            <person name="Chrencik J.E."/>
            <person name="Staker B.L."/>
            <person name="Burgin A.B."/>
            <person name="Pourquier P."/>
            <person name="Pommier Y."/>
            <person name="Stewart L."/>
            <person name="Redinbo M.R."/>
        </authorList>
    </citation>
    <scope>X-RAY CRYSTALLOGRAPHY (2.30 ANGSTROMS) OF 201-765 IN COMPLEX WITH DNA AND TOPOTECAN</scope>
    <scope>ACTIVE SITE</scope>
</reference>
<reference key="42">
    <citation type="journal article" date="2005" name="J. Med. Chem.">
        <title>Structures of three classes of anticancer agents bound to the human topoisomerase I-DNA covalent complex.</title>
        <authorList>
            <person name="Staker B.L."/>
            <person name="Feese M.D."/>
            <person name="Cushman M."/>
            <person name="Pommier Y."/>
            <person name="Zembower D."/>
            <person name="Stewart L."/>
            <person name="Burgin A.B."/>
        </authorList>
    </citation>
    <scope>X-RAY CRYSTALLOGRAPHY (3.00 ANGSTROMS) OF 174-765 IN COMPLEXES WITH DNA AND SYNTHETIC INHIBITORS</scope>
    <scope>ACTIVE SITE</scope>
</reference>
<reference key="43">
    <citation type="journal article" date="2005" name="J. Med. Chem.">
        <title>Synthesis and mechanism of action studies of a series of norindenoisoquinoline topoisomerase I poisons reveal an inhibitor with a flipped orientation in the ternary DNA-enzyme-inhibitor complex as determined by X-ray crystallographic analysis.</title>
        <authorList>
            <person name="Ioanoviciu A."/>
            <person name="Antony S."/>
            <person name="Pommier Y."/>
            <person name="Staker B.L."/>
            <person name="Stewart L."/>
            <person name="Cushman M."/>
        </authorList>
    </citation>
    <scope>X-RAY CRYSTALLOGRAPHY (3.10 ANGSTROMS) OF 174-765 IN COMPLEX WITH DNA AND SYNTHETIC INHIBITORS</scope>
    <scope>CATALYTIC ACTIVITY</scope>
    <scope>FUNCTION</scope>
    <scope>ACTIVE SITE</scope>
</reference>
<reference key="44">
    <citation type="journal article" date="1991" name="Nucleic Acids Res.">
        <title>Molecular cloning of a cDNA of a camptothecin-resistant human DNA topoisomerase I and identification of mutation sites.</title>
        <authorList>
            <person name="Tamura H."/>
            <person name="Kohchi C."/>
            <person name="Yamada R."/>
            <person name="Ikeda T."/>
            <person name="Koiwai O."/>
            <person name="Patterson E."/>
            <person name="Keene J.D."/>
            <person name="Okada K."/>
            <person name="Kjeldsen E."/>
            <person name="Nishikawa K."/>
        </authorList>
    </citation>
    <scope>VARIANT CPT-RESISTANT LEUKEMIA GLY-533</scope>
</reference>
<reference key="45">
    <citation type="journal article" date="1992" name="Biochem. Biophys. Res. Commun.">
        <title>Detection of topoisomerase I gene point mutation in CPT-11 resistant lung cancer cell line.</title>
        <authorList>
            <person name="Kubota N."/>
            <person name="Kanzawa F."/>
            <person name="Nishio K."/>
            <person name="Takeda Y."/>
            <person name="Ohmori T."/>
            <person name="Fujiwara Y."/>
            <person name="Terashima Y."/>
            <person name="Saijo N."/>
        </authorList>
    </citation>
    <scope>VARIANT CPT-RESISTANT LUNG CANCER ALA-729</scope>
</reference>
<reference key="46">
    <citation type="journal article" date="2006" name="Science">
        <title>The consensus coding sequences of human breast and colorectal cancers.</title>
        <authorList>
            <person name="Sjoeblom T."/>
            <person name="Jones S."/>
            <person name="Wood L.D."/>
            <person name="Parsons D.W."/>
            <person name="Lin J."/>
            <person name="Barber T.D."/>
            <person name="Mandelker D."/>
            <person name="Leary R.J."/>
            <person name="Ptak J."/>
            <person name="Silliman N."/>
            <person name="Szabo S."/>
            <person name="Buckhaults P."/>
            <person name="Farrell C."/>
            <person name="Meeh P."/>
            <person name="Markowitz S.D."/>
            <person name="Willis J."/>
            <person name="Dawson D."/>
            <person name="Willson J.K.V."/>
            <person name="Gazdar A.F."/>
            <person name="Hartigan J."/>
            <person name="Wu L."/>
            <person name="Liu C."/>
            <person name="Parmigiani G."/>
            <person name="Park B.H."/>
            <person name="Bachman K.E."/>
            <person name="Papadopoulos N."/>
            <person name="Vogelstein B."/>
            <person name="Kinzler K.W."/>
            <person name="Velculescu V.E."/>
        </authorList>
    </citation>
    <scope>VARIANT [LARGE SCALE ANALYSIS] BREAST CANCER ARG-326</scope>
</reference>
<keyword id="KW-0002">3D-structure</keyword>
<keyword id="KW-0007">Acetylation</keyword>
<keyword id="KW-0090">Biological rhythms</keyword>
<keyword id="KW-0160">Chromosomal rearrangement</keyword>
<keyword id="KW-0903">Direct protein sequencing</keyword>
<keyword id="KW-0238">DNA-binding</keyword>
<keyword id="KW-0945">Host-virus interaction</keyword>
<keyword id="KW-0413">Isomerase</keyword>
<keyword id="KW-1017">Isopeptide bond</keyword>
<keyword id="KW-0539">Nucleus</keyword>
<keyword id="KW-0597">Phosphoprotein</keyword>
<keyword id="KW-1267">Proteomics identification</keyword>
<keyword id="KW-0656">Proto-oncogene</keyword>
<keyword id="KW-1185">Reference proteome</keyword>
<keyword id="KW-0799">Topoisomerase</keyword>
<keyword id="KW-0832">Ubl conjugation</keyword>
<evidence type="ECO:0000250" key="1">
    <source>
        <dbReference type="UniProtKB" id="Q04750"/>
    </source>
</evidence>
<evidence type="ECO:0000250" key="2">
    <source>
        <dbReference type="UniProtKB" id="Q13472"/>
    </source>
</evidence>
<evidence type="ECO:0000255" key="3">
    <source>
        <dbReference type="PROSITE-ProRule" id="PRU01382"/>
    </source>
</evidence>
<evidence type="ECO:0000255" key="4">
    <source>
        <dbReference type="PROSITE-ProRule" id="PRU10130"/>
    </source>
</evidence>
<evidence type="ECO:0000256" key="5">
    <source>
        <dbReference type="SAM" id="MobiDB-lite"/>
    </source>
</evidence>
<evidence type="ECO:0000269" key="6">
    <source>
    </source>
</evidence>
<evidence type="ECO:0000269" key="7">
    <source>
    </source>
</evidence>
<evidence type="ECO:0000269" key="8">
    <source>
    </source>
</evidence>
<evidence type="ECO:0000269" key="9">
    <source>
    </source>
</evidence>
<evidence type="ECO:0000269" key="10">
    <source>
    </source>
</evidence>
<evidence type="ECO:0000269" key="11">
    <source>
    </source>
</evidence>
<evidence type="ECO:0000269" key="12">
    <source>
    </source>
</evidence>
<evidence type="ECO:0000269" key="13">
    <source>
    </source>
</evidence>
<evidence type="ECO:0000269" key="14">
    <source>
    </source>
</evidence>
<evidence type="ECO:0000269" key="15">
    <source>
    </source>
</evidence>
<evidence type="ECO:0000269" key="16">
    <source>
    </source>
</evidence>
<evidence type="ECO:0000269" key="17">
    <source>
    </source>
</evidence>
<evidence type="ECO:0000269" key="18">
    <source>
    </source>
</evidence>
<evidence type="ECO:0000269" key="19">
    <source>
    </source>
</evidence>
<evidence type="ECO:0000269" key="20">
    <source>
    </source>
</evidence>
<evidence type="ECO:0000269" key="21">
    <source>
    </source>
</evidence>
<evidence type="ECO:0000269" key="22">
    <source>
    </source>
</evidence>
<evidence type="ECO:0000269" key="23">
    <source>
    </source>
</evidence>
<evidence type="ECO:0000269" key="24">
    <source>
    </source>
</evidence>
<evidence type="ECO:0000269" key="25">
    <source>
    </source>
</evidence>
<evidence type="ECO:0000269" key="26">
    <source>
    </source>
</evidence>
<evidence type="ECO:0000269" key="27">
    <source>
    </source>
</evidence>
<evidence type="ECO:0000269" key="28">
    <source>
    </source>
</evidence>
<evidence type="ECO:0000269" key="29">
    <source ref="7"/>
</evidence>
<evidence type="ECO:0000305" key="30"/>
<evidence type="ECO:0007744" key="31">
    <source>
    </source>
</evidence>
<evidence type="ECO:0007744" key="32">
    <source>
    </source>
</evidence>
<evidence type="ECO:0007744" key="33">
    <source>
    </source>
</evidence>
<evidence type="ECO:0007744" key="34">
    <source>
    </source>
</evidence>
<evidence type="ECO:0007744" key="35">
    <source>
    </source>
</evidence>
<evidence type="ECO:0007744" key="36">
    <source>
    </source>
</evidence>
<evidence type="ECO:0007744" key="37">
    <source>
    </source>
</evidence>
<evidence type="ECO:0007744" key="38">
    <source>
    </source>
</evidence>
<evidence type="ECO:0007744" key="39">
    <source>
    </source>
</evidence>
<evidence type="ECO:0007829" key="40">
    <source>
        <dbReference type="PDB" id="1A31"/>
    </source>
</evidence>
<evidence type="ECO:0007829" key="41">
    <source>
        <dbReference type="PDB" id="1A35"/>
    </source>
</evidence>
<evidence type="ECO:0007829" key="42">
    <source>
        <dbReference type="PDB" id="1A36"/>
    </source>
</evidence>
<evidence type="ECO:0007829" key="43">
    <source>
        <dbReference type="PDB" id="1K4S"/>
    </source>
</evidence>
<evidence type="ECO:0007829" key="44">
    <source>
        <dbReference type="PDB" id="1K4T"/>
    </source>
</evidence>
<evidence type="ECO:0007829" key="45">
    <source>
        <dbReference type="PDB" id="1NH3"/>
    </source>
</evidence>
<evidence type="ECO:0007829" key="46">
    <source>
        <dbReference type="PDB" id="1SC7"/>
    </source>
</evidence>
<evidence type="ECO:0007829" key="47">
    <source>
        <dbReference type="PDB" id="1SEU"/>
    </source>
</evidence>
<evidence type="ECO:0007829" key="48">
    <source>
        <dbReference type="PDB" id="1T8I"/>
    </source>
</evidence>
<comment type="function">
    <text evidence="2 13 16 20 21 25">Releases the supercoiling and torsional tension of DNA introduced during the DNA replication and transcription by transiently cleaving and rejoining one strand of the DNA duplex. Introduces a single-strand break via transesterification at a target site in duplex DNA. The scissile phosphodiester is attacked by the catalytic tyrosine of the enzyme, resulting in the formation of a DNA-(3'-phosphotyrosyl)-enzyme intermediate and the expulsion of a 5'-OH DNA strand. The free DNA strand then rotates around the intact phosphodiester bond on the opposing strand, thus removing DNA supercoils. Finally, in the religation step, the DNA 5'-OH attacks the covalent intermediate to expel the active-site tyrosine and restore the DNA phosphodiester backbone (By similarity). Regulates the alternative splicing of tissue factor (F3) pre-mRNA in endothelial cells. Involved in the circadian transcription of the core circadian clock component BMAL1 by altering the chromatin structure around the ROR response elements (ROREs) on the BMAL1 promoter.</text>
</comment>
<comment type="catalytic activity">
    <reaction evidence="4 13 16 25">
        <text>ATP-independent breakage of single-stranded DNA, followed by passage and rejoining.</text>
        <dbReference type="EC" id="5.6.2.1"/>
    </reaction>
</comment>
<comment type="activity regulation">
    <text>Specifically inhibited by camptothecin (CPT), a plant alkaloid with antitumor activity.</text>
</comment>
<comment type="subunit">
    <text evidence="7 9 11 14 16 23 24 27 28">Monomer. Interacts with ERCC6 (PubMed:26030138). Interacts with TPRN; TPRN interacts with a number of DNA damage response proteins, is recruited to sites of DNA damage and may play a role in DNA damage repair (PubMed:23213405).</text>
</comment>
<comment type="subunit">
    <text evidence="18">(Microbial infection) Interacts with SV40 Large T antigen; this interactions allows viral DNA replication.</text>
</comment>
<comment type="interaction">
    <interactant intactId="EBI-876302">
        <id>P11387</id>
    </interactant>
    <interactant intactId="EBI-375543">
        <id>P00519</id>
        <label>ABL1</label>
    </interactant>
    <organismsDiffer>false</organismsDiffer>
    <experiments>7</experiments>
</comment>
<comment type="interaction">
    <interactant intactId="EBI-876302">
        <id>P11387</id>
    </interactant>
    <interactant intactId="EBI-447544">
        <id>P01106</id>
        <label>MYC</label>
    </interactant>
    <organismsDiffer>false</organismsDiffer>
    <experiments>3</experiments>
</comment>
<comment type="interaction">
    <interactant intactId="EBI-876302">
        <id>P11387</id>
    </interactant>
    <interactant intactId="EBI-1385894">
        <id>Q99801</id>
        <label>NKX3-1</label>
    </interactant>
    <organismsDiffer>false</organismsDiffer>
    <experiments>6</experiments>
</comment>
<comment type="interaction">
    <interactant intactId="EBI-876302">
        <id>P11387</id>
    </interactant>
    <interactant intactId="EBI-346375">
        <id>P42768</id>
        <label>WAS</label>
    </interactant>
    <organismsDiffer>false</organismsDiffer>
    <experiments>3</experiments>
</comment>
<comment type="subcellular location">
    <subcellularLocation>
        <location evidence="8">Nucleus</location>
        <location evidence="8">Nucleolus</location>
    </subcellularLocation>
    <subcellularLocation>
        <location evidence="8">Nucleus</location>
        <location evidence="8">Nucleoplasm</location>
    </subcellularLocation>
    <text>Diffuse nuclear localization with some enrichment in nucleoli. On CPT treatment, cleared from nucleoli into nucleoplasm. Sumoylated forms found in both nucleoplasm and nucleoli.</text>
</comment>
<comment type="tissue specificity">
    <text evidence="20">Endothelial cells.</text>
</comment>
<comment type="PTM">
    <text evidence="8">Sumoylated. Lys-117 is the main site of sumoylation. Sumoylation plays a role in partitioning TOP1 between nucleoli and nucleoplasm. Levels are dramatically increased on camptothecin (CPT) treatment.</text>
</comment>
<comment type="PTM">
    <text evidence="22">Phosphorylation at Ser-506 by CK2 increases binding to supercoiled DNA and sensitivity to camptothecin.</text>
</comment>
<comment type="disease">
    <text evidence="6">A chromosomal aberration involving TOP1 is found in a form of therapy-related myelodysplastic syndrome. Translocation t(11;20)(p15;q11) with NUP98.</text>
</comment>
<comment type="miscellaneous">
    <text>Eukaryotic topoisomerase I and II can relax both negative and positive supercoils, whereas prokaryotic enzymes relax only negative supercoils.</text>
</comment>
<comment type="similarity">
    <text evidence="30">Belongs to the type IB topoisomerase family.</text>
</comment>
<comment type="sequence caution" evidence="30">
    <conflict type="erroneous gene model prediction">
        <sequence resource="EMBL-CDS" id="CAA36834"/>
    </conflict>
</comment>
<comment type="online information" name="Atlas of Genetics and Cytogenetics in Oncology and Haematology">
    <link uri="https://atlasgeneticsoncology.org/gene/320/TOP1"/>
</comment>
<accession>P11387</accession>
<accession>A8KA78</accession>
<accession>E1P5W3</accession>
<accession>O43256</accession>
<accession>Q12855</accession>
<accession>Q12856</accession>
<accession>Q15610</accession>
<accession>Q5TFY3</accession>
<accession>Q9UJN0</accession>
<feature type="initiator methionine" description="Removed" evidence="29 32 33">
    <location>
        <position position="1"/>
    </location>
</feature>
<feature type="chain" id="PRO_0000145201" description="DNA topoisomerase 1">
    <location>
        <begin position="2"/>
        <end position="765"/>
    </location>
</feature>
<feature type="domain" description="Topo IB-type catalytic" evidence="3">
    <location>
        <begin position="432"/>
        <end position="765"/>
    </location>
</feature>
<feature type="region of interest" description="Disordered" evidence="5">
    <location>
        <begin position="1"/>
        <end position="199"/>
    </location>
</feature>
<feature type="region of interest" description="Interaction with DNA">
    <location>
        <begin position="425"/>
        <end position="426"/>
    </location>
</feature>
<feature type="region of interest" description="Interaction with DNA">
    <location>
        <begin position="488"/>
        <end position="493"/>
    </location>
</feature>
<feature type="region of interest" description="Interaction with DNA">
    <location>
        <begin position="585"/>
        <end position="587"/>
    </location>
</feature>
<feature type="compositionally biased region" description="Basic and acidic residues" evidence="5">
    <location>
        <begin position="1"/>
        <end position="23"/>
    </location>
</feature>
<feature type="compositionally biased region" description="Basic residues" evidence="5">
    <location>
        <begin position="24"/>
        <end position="39"/>
    </location>
</feature>
<feature type="compositionally biased region" description="Basic and acidic residues" evidence="5">
    <location>
        <begin position="40"/>
        <end position="108"/>
    </location>
</feature>
<feature type="compositionally biased region" description="Basic and acidic residues" evidence="5">
    <location>
        <begin position="129"/>
        <end position="166"/>
    </location>
</feature>
<feature type="compositionally biased region" description="Basic and acidic residues" evidence="5">
    <location>
        <begin position="179"/>
        <end position="199"/>
    </location>
</feature>
<feature type="active site" description="O-(3'-phospho-DNA)-tyrosine intermediate" evidence="3 4 7 10 11 14 15 16 27">
    <location>
        <position position="723"/>
    </location>
</feature>
<feature type="site" description="Interaction with DNA">
    <location>
        <position position="316"/>
    </location>
</feature>
<feature type="site" description="Interaction with DNA">
    <location>
        <position position="364"/>
    </location>
</feature>
<feature type="site" description="Interaction with DNA">
    <location>
        <position position="412"/>
    </location>
</feature>
<feature type="site" description="Interaction with DNA">
    <location>
        <position position="443"/>
    </location>
</feature>
<feature type="site" description="Interaction with DNA">
    <location>
        <position position="501"/>
    </location>
</feature>
<feature type="site" description="Interaction with DNA">
    <location>
        <position position="532"/>
    </location>
</feature>
<feature type="site" description="Interaction with DNA">
    <location>
        <position position="574"/>
    </location>
</feature>
<feature type="site" description="Interaction with DNA">
    <location>
        <position position="632"/>
    </location>
</feature>
<feature type="site" description="Interaction with DNA">
    <location>
        <position position="650"/>
    </location>
</feature>
<feature type="modified residue" description="N-acetylserine" evidence="29 32 33">
    <location>
        <position position="2"/>
    </location>
</feature>
<feature type="modified residue" description="Phosphoserine" evidence="34">
    <location>
        <position position="2"/>
    </location>
</feature>
<feature type="modified residue" description="Phosphoserine" evidence="32 33 34">
    <location>
        <position position="10"/>
    </location>
</feature>
<feature type="modified residue" description="Phosphoserine" evidence="32">
    <location>
        <position position="57"/>
    </location>
</feature>
<feature type="modified residue" description="Phosphoserine" evidence="32">
    <location>
        <position position="112"/>
    </location>
</feature>
<feature type="modified residue" description="N6-acetyllysine; alternate" evidence="1">
    <location>
        <position position="172"/>
    </location>
</feature>
<feature type="modified residue" description="N6-acetyllysine" evidence="31">
    <location>
        <position position="280"/>
    </location>
</feature>
<feature type="modified residue" description="Phosphoserine; by CK2" evidence="22">
    <location>
        <position position="506"/>
    </location>
</feature>
<feature type="cross-link" description="Glycyl lysine isopeptide (Lys-Gly) (interchain with G-Cter in SUMO2)" evidence="39">
    <location>
        <position position="101"/>
    </location>
</feature>
<feature type="cross-link" description="Glycyl lysine isopeptide (Lys-Gly) (interchain with G-Cter in SUMO); alternate" evidence="30">
    <location>
        <position position="103"/>
    </location>
</feature>
<feature type="cross-link" description="Glycyl lysine isopeptide (Lys-Gly) (interchain with G-Cter in SUMO2); alternate" evidence="39">
    <location>
        <position position="103"/>
    </location>
</feature>
<feature type="cross-link" description="Glycyl lysine isopeptide (Lys-Gly) (interchain with G-Cter in SUMO); alternate">
    <location>
        <position position="117"/>
    </location>
</feature>
<feature type="cross-link" description="Glycyl lysine isopeptide (Lys-Gly) (interchain with G-Cter in SUMO1); alternate" evidence="35">
    <location>
        <position position="117"/>
    </location>
</feature>
<feature type="cross-link" description="Glycyl lysine isopeptide (Lys-Gly) (interchain with G-Cter in SUMO2); alternate" evidence="35 36 38 39">
    <location>
        <position position="117"/>
    </location>
</feature>
<feature type="cross-link" description="Glycyl lysine isopeptide (Lys-Gly) (interchain with G-Cter in SUMO2)" evidence="36 39">
    <location>
        <position position="134"/>
    </location>
</feature>
<feature type="cross-link" description="Glycyl lysine isopeptide (Lys-Gly) (interchain with G-Cter in SUMO2)" evidence="37 38 39">
    <location>
        <position position="148"/>
    </location>
</feature>
<feature type="cross-link" description="Glycyl lysine isopeptide (Lys-Gly) (interchain with G-Cter in SUMO); alternate" evidence="30">
    <location>
        <position position="153"/>
    </location>
</feature>
<feature type="cross-link" description="Glycyl lysine isopeptide (Lys-Gly) (interchain with G-Cter in SUMO2); alternate" evidence="36 37 38 39">
    <location>
        <position position="153"/>
    </location>
</feature>
<feature type="cross-link" description="Glycyl lysine isopeptide (Lys-Gly) (interchain with G-Cter in SUMO2)" evidence="36 39">
    <location>
        <position position="158"/>
    </location>
</feature>
<feature type="cross-link" description="Glycyl lysine isopeptide (Lys-Gly) (interchain with G-Cter in SUMO2)" evidence="36 37 38 39">
    <location>
        <position position="164"/>
    </location>
</feature>
<feature type="cross-link" description="Glycyl lysine isopeptide (Lys-Gly) (interchain with G-Cter in SUMO2); alternate" evidence="39">
    <location>
        <position position="172"/>
    </location>
</feature>
<feature type="cross-link" description="Glycyl lysine isopeptide (Lys-Gly) (interchain with G-Cter in SUMO2)" evidence="39">
    <location>
        <position position="204"/>
    </location>
</feature>
<feature type="cross-link" description="Glycyl lysine isopeptide (Lys-Gly) (interchain with G-Cter in SUMO2)" evidence="37 39">
    <location>
        <position position="336"/>
    </location>
</feature>
<feature type="cross-link" description="Glycyl lysine isopeptide (Lys-Gly) (interchain with G-Cter in SUMO2)" evidence="39">
    <location>
        <position position="549"/>
    </location>
</feature>
<feature type="cross-link" description="Glycyl lysine isopeptide (Lys-Gly) (interchain with G-Cter in SUMO2)" evidence="39">
    <location>
        <position position="642"/>
    </location>
</feature>
<feature type="cross-link" description="Glycyl lysine isopeptide (Lys-Gly) (interchain with G-Cter in SUMO2)" evidence="39">
    <location>
        <position position="700"/>
    </location>
</feature>
<feature type="cross-link" description="Glycyl lysine isopeptide (Lys-Gly) (interchain with G-Cter in SUMO2)" evidence="39">
    <location>
        <position position="712"/>
    </location>
</feature>
<feature type="sequence variant" id="VAR_052592" description="In dbSNP:rs6029542.">
    <original>G</original>
    <variation>S</variation>
    <location>
        <position position="214"/>
    </location>
</feature>
<feature type="sequence variant" id="VAR_036555" description="In breast cancer; somatic mutation." evidence="17">
    <original>K</original>
    <variation>R</variation>
    <location>
        <position position="326"/>
    </location>
</feature>
<feature type="sequence variant" id="VAR_010666" description="In CPT-resistant leukemia." evidence="26">
    <original>M</original>
    <variation>T</variation>
    <location>
        <position position="370"/>
    </location>
</feature>
<feature type="sequence variant" id="VAR_007530" description="In CPT-resistant leukemia; dbSNP:rs267607131." evidence="19">
    <original>D</original>
    <variation>G</variation>
    <location>
        <position position="533"/>
    </location>
</feature>
<feature type="sequence variant" id="VAR_010667" description="In CPT-resistant leukemia." evidence="26">
    <original>N</original>
    <variation>S</variation>
    <location>
        <position position="722"/>
    </location>
</feature>
<feature type="sequence variant" id="VAR_007531" description="In CPT-resistant lung cancer." evidence="12">
    <original>T</original>
    <variation>A</variation>
    <location>
        <position position="729"/>
    </location>
</feature>
<feature type="mutagenesis site" description="Localizes in both nucleoplasm and nucleoli; when associated with R-117 or R-153. Almost complete loss of sumoylation, concentrates in nucleoli and no clearing from nucleoli on CPT treatment; when associated with R-117 and R-153." evidence="8">
    <original>K</original>
    <variation>R</variation>
    <location>
        <position position="103"/>
    </location>
</feature>
<feature type="mutagenesis site" description="5-fold decrease in sumoylation. Localizes in both nucleoplasm and nucleoli; when associated with or without R-103 or R-153. Almost complete loss of sumoylation, concentrates in nucleoli and no clearing from nucleoli on CPT treatment; when associated with R-103 and R-153." evidence="8">
    <original>K</original>
    <variation>R</variation>
    <location>
        <position position="117"/>
    </location>
</feature>
<feature type="mutagenesis site" description="Localizes in both nucleoplasm and nucleoli; when associated with R-103 or R-117. Almost complete loss of sumoylation, concentrates in nucleoli and no clearing from nucleoli on CPT treatment; when associated with R-103 and R-117." evidence="8">
    <original>K</original>
    <variation>R</variation>
    <location>
        <position position="153"/>
    </location>
</feature>
<feature type="mutagenesis site" description="Almost abolishes enzyme activity." evidence="13">
    <original>K</original>
    <variation>A</variation>
    <location>
        <position position="532"/>
    </location>
</feature>
<feature type="mutagenesis site" description="Strongly reduced enzyme activity." evidence="13">
    <original>K</original>
    <variation>R</variation>
    <location>
        <position position="532"/>
    </location>
</feature>
<feature type="mutagenesis site" description="No change in CPT-induced clearing from nuclei." evidence="8">
    <original>Y</original>
    <variation>F</variation>
    <location>
        <position position="723"/>
    </location>
</feature>
<feature type="sequence conflict" description="In Ref. 1; AAA61207." evidence="30" ref="1">
    <original>A</original>
    <variation>V</variation>
    <location>
        <position position="145"/>
    </location>
</feature>
<feature type="helix" evidence="44">
    <location>
        <begin position="205"/>
        <end position="207"/>
    </location>
</feature>
<feature type="strand" evidence="41">
    <location>
        <begin position="220"/>
        <end position="222"/>
    </location>
</feature>
<feature type="strand" evidence="41">
    <location>
        <begin position="236"/>
        <end position="238"/>
    </location>
</feature>
<feature type="strand" evidence="42">
    <location>
        <begin position="240"/>
        <end position="242"/>
    </location>
</feature>
<feature type="strand" evidence="42">
    <location>
        <begin position="245"/>
        <end position="247"/>
    </location>
</feature>
<feature type="helix" evidence="40">
    <location>
        <begin position="251"/>
        <end position="261"/>
    </location>
</feature>
<feature type="turn" evidence="40">
    <location>
        <begin position="262"/>
        <end position="265"/>
    </location>
</feature>
<feature type="helix" evidence="40">
    <location>
        <begin position="267"/>
        <end position="270"/>
    </location>
</feature>
<feature type="helix" evidence="40">
    <location>
        <begin position="272"/>
        <end position="285"/>
    </location>
</feature>
<feature type="helix" evidence="40">
    <location>
        <begin position="288"/>
        <end position="293"/>
    </location>
</feature>
<feature type="helix" evidence="40">
    <location>
        <begin position="297"/>
        <end position="299"/>
    </location>
</feature>
<feature type="helix" evidence="40">
    <location>
        <begin position="303"/>
        <end position="317"/>
    </location>
</feature>
<feature type="helix" evidence="40">
    <location>
        <begin position="321"/>
        <end position="338"/>
    </location>
</feature>
<feature type="strand" evidence="40">
    <location>
        <begin position="339"/>
        <end position="343"/>
    </location>
</feature>
<feature type="strand" evidence="40">
    <location>
        <begin position="346"/>
        <end position="351"/>
    </location>
</feature>
<feature type="strand" evidence="40">
    <location>
        <begin position="358"/>
        <end position="360"/>
    </location>
</feature>
<feature type="strand" evidence="40">
    <location>
        <begin position="364"/>
        <end position="366"/>
    </location>
</feature>
<feature type="turn" evidence="40">
    <location>
        <begin position="368"/>
        <end position="371"/>
    </location>
</feature>
<feature type="helix" evidence="40">
    <location>
        <begin position="379"/>
        <end position="381"/>
    </location>
</feature>
<feature type="strand" evidence="40">
    <location>
        <begin position="383"/>
        <end position="385"/>
    </location>
</feature>
<feature type="strand" evidence="47">
    <location>
        <begin position="396"/>
        <end position="398"/>
    </location>
</feature>
<feature type="strand" evidence="40">
    <location>
        <begin position="402"/>
        <end position="405"/>
    </location>
</feature>
<feature type="strand" evidence="40">
    <location>
        <begin position="413"/>
        <end position="417"/>
    </location>
</feature>
<feature type="turn" evidence="40">
    <location>
        <begin position="419"/>
        <end position="421"/>
    </location>
</feature>
<feature type="strand" evidence="40">
    <location>
        <begin position="424"/>
        <end position="427"/>
    </location>
</feature>
<feature type="strand" evidence="43">
    <location>
        <begin position="431"/>
        <end position="433"/>
    </location>
</feature>
<feature type="helix" evidence="40">
    <location>
        <begin position="434"/>
        <end position="464"/>
    </location>
</feature>
<feature type="helix" evidence="40">
    <location>
        <begin position="470"/>
        <end position="485"/>
    </location>
</feature>
<feature type="turn" evidence="40">
    <location>
        <begin position="495"/>
        <end position="497"/>
    </location>
</feature>
<feature type="helix" evidence="40">
    <location>
        <begin position="504"/>
        <end position="506"/>
    </location>
</feature>
<feature type="helix" evidence="40">
    <location>
        <begin position="509"/>
        <end position="511"/>
    </location>
</feature>
<feature type="strand" evidence="40">
    <location>
        <begin position="514"/>
        <end position="518"/>
    </location>
</feature>
<feature type="strand" evidence="40">
    <location>
        <begin position="521"/>
        <end position="530"/>
    </location>
</feature>
<feature type="helix" evidence="40">
    <location>
        <begin position="532"/>
        <end position="534"/>
    </location>
</feature>
<feature type="strand" evidence="40">
    <location>
        <begin position="536"/>
        <end position="542"/>
    </location>
</feature>
<feature type="helix" evidence="40">
    <location>
        <begin position="545"/>
        <end position="553"/>
    </location>
</feature>
<feature type="turn" evidence="40">
    <location>
        <begin position="554"/>
        <end position="557"/>
    </location>
</feature>
<feature type="turn" evidence="40">
    <location>
        <begin position="564"/>
        <end position="567"/>
    </location>
</feature>
<feature type="helix" evidence="40">
    <location>
        <begin position="570"/>
        <end position="580"/>
    </location>
</feature>
<feature type="strand" evidence="45">
    <location>
        <begin position="581"/>
        <end position="583"/>
    </location>
</feature>
<feature type="helix" evidence="40">
    <location>
        <begin position="586"/>
        <end position="605"/>
    </location>
</feature>
<feature type="strand" evidence="48">
    <location>
        <begin position="608"/>
        <end position="610"/>
    </location>
</feature>
<feature type="helix" evidence="40">
    <location>
        <begin position="612"/>
        <end position="625"/>
    </location>
</feature>
<feature type="turn" evidence="46">
    <location>
        <begin position="626"/>
        <end position="631"/>
    </location>
</feature>
<feature type="helix" evidence="44">
    <location>
        <begin position="640"/>
        <end position="643"/>
    </location>
</feature>
<feature type="helix" evidence="44">
    <location>
        <begin position="644"/>
        <end position="673"/>
    </location>
</feature>
<feature type="helix" evidence="44">
    <location>
        <begin position="678"/>
        <end position="710"/>
    </location>
</feature>
<feature type="strand" evidence="44">
    <location>
        <begin position="712"/>
        <end position="714"/>
    </location>
</feature>
<feature type="turn" evidence="40">
    <location>
        <begin position="721"/>
        <end position="723"/>
    </location>
</feature>
<feature type="helix" evidence="40">
    <location>
        <begin position="726"/>
        <end position="735"/>
    </location>
</feature>
<feature type="helix" evidence="40">
    <location>
        <begin position="740"/>
        <end position="742"/>
    </location>
</feature>
<feature type="helix" evidence="40">
    <location>
        <begin position="746"/>
        <end position="751"/>
    </location>
</feature>
<feature type="helix" evidence="40">
    <location>
        <begin position="753"/>
        <end position="758"/>
    </location>
</feature>
<protein>
    <recommendedName>
        <fullName>DNA topoisomerase 1</fullName>
        <ecNumber evidence="4 13 16 25">5.6.2.1</ecNumber>
    </recommendedName>
    <alternativeName>
        <fullName>DNA topoisomerase I</fullName>
    </alternativeName>
</protein>
<gene>
    <name type="primary">TOP1</name>
</gene>
<proteinExistence type="evidence at protein level"/>
<dbReference type="EC" id="5.6.2.1" evidence="4 13 16 25"/>
<dbReference type="EMBL" id="J03250">
    <property type="protein sequence ID" value="AAA61207.1"/>
    <property type="molecule type" value="mRNA"/>
</dbReference>
<dbReference type="EMBL" id="M60706">
    <property type="protein sequence ID" value="AAA61206.1"/>
    <property type="molecule type" value="Genomic_DNA"/>
</dbReference>
<dbReference type="EMBL" id="M60688">
    <property type="protein sequence ID" value="AAA61206.1"/>
    <property type="status" value="JOINED"/>
    <property type="molecule type" value="Genomic_DNA"/>
</dbReference>
<dbReference type="EMBL" id="M60689">
    <property type="protein sequence ID" value="AAA61206.1"/>
    <property type="status" value="JOINED"/>
    <property type="molecule type" value="Genomic_DNA"/>
</dbReference>
<dbReference type="EMBL" id="M60690">
    <property type="protein sequence ID" value="AAA61206.1"/>
    <property type="status" value="JOINED"/>
    <property type="molecule type" value="Genomic_DNA"/>
</dbReference>
<dbReference type="EMBL" id="M60691">
    <property type="protein sequence ID" value="AAA61206.1"/>
    <property type="status" value="JOINED"/>
    <property type="molecule type" value="Genomic_DNA"/>
</dbReference>
<dbReference type="EMBL" id="M60692">
    <property type="protein sequence ID" value="AAA61206.1"/>
    <property type="status" value="JOINED"/>
    <property type="molecule type" value="Genomic_DNA"/>
</dbReference>
<dbReference type="EMBL" id="M60693">
    <property type="protein sequence ID" value="AAA61206.1"/>
    <property type="status" value="JOINED"/>
    <property type="molecule type" value="Genomic_DNA"/>
</dbReference>
<dbReference type="EMBL" id="M60694">
    <property type="protein sequence ID" value="AAA61206.1"/>
    <property type="status" value="JOINED"/>
    <property type="molecule type" value="Genomic_DNA"/>
</dbReference>
<dbReference type="EMBL" id="M60695">
    <property type="protein sequence ID" value="AAA61206.1"/>
    <property type="status" value="JOINED"/>
    <property type="molecule type" value="Genomic_DNA"/>
</dbReference>
<dbReference type="EMBL" id="M60696">
    <property type="protein sequence ID" value="AAA61206.1"/>
    <property type="status" value="JOINED"/>
    <property type="molecule type" value="Genomic_DNA"/>
</dbReference>
<dbReference type="EMBL" id="M60697">
    <property type="protein sequence ID" value="AAA61206.1"/>
    <property type="status" value="JOINED"/>
    <property type="molecule type" value="Genomic_DNA"/>
</dbReference>
<dbReference type="EMBL" id="M60698">
    <property type="protein sequence ID" value="AAA61206.1"/>
    <property type="status" value="JOINED"/>
    <property type="molecule type" value="Genomic_DNA"/>
</dbReference>
<dbReference type="EMBL" id="M60699">
    <property type="protein sequence ID" value="AAA61206.1"/>
    <property type="status" value="JOINED"/>
    <property type="molecule type" value="Genomic_DNA"/>
</dbReference>
<dbReference type="EMBL" id="M60700">
    <property type="protein sequence ID" value="AAA61206.1"/>
    <property type="status" value="JOINED"/>
    <property type="molecule type" value="Genomic_DNA"/>
</dbReference>
<dbReference type="EMBL" id="M60701">
    <property type="protein sequence ID" value="AAA61206.1"/>
    <property type="status" value="JOINED"/>
    <property type="molecule type" value="Genomic_DNA"/>
</dbReference>
<dbReference type="EMBL" id="M60702">
    <property type="protein sequence ID" value="AAA61206.1"/>
    <property type="status" value="JOINED"/>
    <property type="molecule type" value="Genomic_DNA"/>
</dbReference>
<dbReference type="EMBL" id="M60703">
    <property type="protein sequence ID" value="AAA61206.1"/>
    <property type="status" value="JOINED"/>
    <property type="molecule type" value="Genomic_DNA"/>
</dbReference>
<dbReference type="EMBL" id="M60704">
    <property type="protein sequence ID" value="AAA61206.1"/>
    <property type="status" value="JOINED"/>
    <property type="molecule type" value="Genomic_DNA"/>
</dbReference>
<dbReference type="EMBL" id="M60705">
    <property type="protein sequence ID" value="AAA61206.1"/>
    <property type="status" value="JOINED"/>
    <property type="molecule type" value="Genomic_DNA"/>
</dbReference>
<dbReference type="EMBL" id="AK292943">
    <property type="protein sequence ID" value="BAF85632.1"/>
    <property type="molecule type" value="mRNA"/>
</dbReference>
<dbReference type="EMBL" id="AL035652">
    <property type="status" value="NOT_ANNOTATED_CDS"/>
    <property type="molecule type" value="Genomic_DNA"/>
</dbReference>
<dbReference type="EMBL" id="AL022394">
    <property type="status" value="NOT_ANNOTATED_CDS"/>
    <property type="molecule type" value="Genomic_DNA"/>
</dbReference>
<dbReference type="EMBL" id="CH471077">
    <property type="protein sequence ID" value="EAW75994.1"/>
    <property type="molecule type" value="Genomic_DNA"/>
</dbReference>
<dbReference type="EMBL" id="CH471077">
    <property type="protein sequence ID" value="EAW75995.1"/>
    <property type="molecule type" value="Genomic_DNA"/>
</dbReference>
<dbReference type="EMBL" id="X52601">
    <property type="protein sequence ID" value="CAA36834.1"/>
    <property type="status" value="ALT_SEQ"/>
    <property type="molecule type" value="Genomic_DNA"/>
</dbReference>
<dbReference type="EMBL" id="U07804">
    <property type="protein sequence ID" value="AAB60379.1"/>
    <property type="molecule type" value="mRNA"/>
</dbReference>
<dbReference type="EMBL" id="U07806">
    <property type="protein sequence ID" value="AAB60380.1"/>
    <property type="molecule type" value="mRNA"/>
</dbReference>
<dbReference type="EMBL" id="X16479">
    <property type="protein sequence ID" value="CAA34500.2"/>
    <property type="molecule type" value="mRNA"/>
</dbReference>
<dbReference type="EMBL" id="M27913">
    <property type="protein sequence ID" value="AAA61208.1"/>
    <property type="molecule type" value="mRNA"/>
</dbReference>
<dbReference type="CCDS" id="CCDS13312.1"/>
<dbReference type="PIR" id="A30887">
    <property type="entry name" value="ISHUT1"/>
</dbReference>
<dbReference type="RefSeq" id="NP_003277.1">
    <property type="nucleotide sequence ID" value="NM_003286.4"/>
</dbReference>
<dbReference type="PDB" id="1A31">
    <property type="method" value="X-ray"/>
    <property type="resolution" value="2.10 A"/>
    <property type="chains" value="A=175-765"/>
</dbReference>
<dbReference type="PDB" id="1A35">
    <property type="method" value="X-ray"/>
    <property type="resolution" value="2.50 A"/>
    <property type="chains" value="A=175-765"/>
</dbReference>
<dbReference type="PDB" id="1A36">
    <property type="method" value="X-ray"/>
    <property type="resolution" value="2.80 A"/>
    <property type="chains" value="A=175-765"/>
</dbReference>
<dbReference type="PDB" id="1EJ9">
    <property type="method" value="X-ray"/>
    <property type="resolution" value="2.60 A"/>
    <property type="chains" value="A=203-765"/>
</dbReference>
<dbReference type="PDB" id="1K4S">
    <property type="method" value="X-ray"/>
    <property type="resolution" value="3.20 A"/>
    <property type="chains" value="A=174-765"/>
</dbReference>
<dbReference type="PDB" id="1K4T">
    <property type="method" value="X-ray"/>
    <property type="resolution" value="2.10 A"/>
    <property type="chains" value="A=174-765"/>
</dbReference>
<dbReference type="PDB" id="1LPQ">
    <property type="method" value="X-ray"/>
    <property type="resolution" value="3.14 A"/>
    <property type="chains" value="A=202-765"/>
</dbReference>
<dbReference type="PDB" id="1NH3">
    <property type="method" value="X-ray"/>
    <property type="resolution" value="3.10 A"/>
    <property type="chains" value="A=203-765"/>
</dbReference>
<dbReference type="PDB" id="1R49">
    <property type="method" value="X-ray"/>
    <property type="resolution" value="3.13 A"/>
    <property type="chains" value="A=174-765"/>
</dbReference>
<dbReference type="PDB" id="1RR8">
    <property type="method" value="X-ray"/>
    <property type="resolution" value="2.60 A"/>
    <property type="chains" value="C=203-765"/>
</dbReference>
<dbReference type="PDB" id="1RRJ">
    <property type="method" value="X-ray"/>
    <property type="resolution" value="2.30 A"/>
    <property type="chains" value="A=201-765"/>
</dbReference>
<dbReference type="PDB" id="1SC7">
    <property type="method" value="X-ray"/>
    <property type="resolution" value="3.00 A"/>
    <property type="chains" value="A=174-765"/>
</dbReference>
<dbReference type="PDB" id="1SEU">
    <property type="method" value="X-ray"/>
    <property type="resolution" value="3.00 A"/>
    <property type="chains" value="A=174-765"/>
</dbReference>
<dbReference type="PDB" id="1T8I">
    <property type="method" value="X-ray"/>
    <property type="resolution" value="3.00 A"/>
    <property type="chains" value="A=174-765"/>
</dbReference>
<dbReference type="PDB" id="1TL8">
    <property type="method" value="X-ray"/>
    <property type="resolution" value="3.10 A"/>
    <property type="chains" value="A=174-765"/>
</dbReference>
<dbReference type="PDBsum" id="1A31"/>
<dbReference type="PDBsum" id="1A35"/>
<dbReference type="PDBsum" id="1A36"/>
<dbReference type="PDBsum" id="1EJ9"/>
<dbReference type="PDBsum" id="1K4S"/>
<dbReference type="PDBsum" id="1K4T"/>
<dbReference type="PDBsum" id="1LPQ"/>
<dbReference type="PDBsum" id="1NH3"/>
<dbReference type="PDBsum" id="1R49"/>
<dbReference type="PDBsum" id="1RR8"/>
<dbReference type="PDBsum" id="1RRJ"/>
<dbReference type="PDBsum" id="1SC7"/>
<dbReference type="PDBsum" id="1SEU"/>
<dbReference type="PDBsum" id="1T8I"/>
<dbReference type="PDBsum" id="1TL8"/>
<dbReference type="SMR" id="P11387"/>
<dbReference type="BioGRID" id="113003">
    <property type="interactions" value="683"/>
</dbReference>
<dbReference type="CORUM" id="P11387"/>
<dbReference type="DIP" id="DIP-36356N"/>
<dbReference type="ELM" id="P11387"/>
<dbReference type="FunCoup" id="P11387">
    <property type="interactions" value="3157"/>
</dbReference>
<dbReference type="IntAct" id="P11387">
    <property type="interactions" value="398"/>
</dbReference>
<dbReference type="MINT" id="P11387"/>
<dbReference type="STRING" id="9606.ENSP00000354522"/>
<dbReference type="BindingDB" id="P11387"/>
<dbReference type="ChEMBL" id="CHEMBL1781"/>
<dbReference type="DrugBank" id="DB12385">
    <property type="generic name" value="10-hydroxycamptothecin"/>
</dbReference>
<dbReference type="DrugBank" id="DB07354">
    <property type="generic name" value="2,3-DIMETHOXY-12H-[1,3]DIOXOLO[5,6]INDENO[1,2-C]ISOQUINOLIN-6-IUM"/>
</dbReference>
<dbReference type="DrugBank" id="DB08159">
    <property type="generic name" value="4-(5,11-DIOXO-5H-INDENO[1,2-C]ISOQUINOLIN-6(11H)-YL)BUTANOATE"/>
</dbReference>
<dbReference type="DrugBank" id="DB12515">
    <property type="generic name" value="9-aminocamptothecin"/>
</dbReference>
<dbReference type="DrugBank" id="DB06362">
    <property type="generic name" value="Becatecarin"/>
</dbReference>
<dbReference type="DrugBank" id="DB12459">
    <property type="generic name" value="Belotecan"/>
</dbReference>
<dbReference type="DrugBank" id="DB04690">
    <property type="generic name" value="Camptothecin"/>
</dbReference>
<dbReference type="DrugBank" id="DB05806">
    <property type="generic name" value="Cositecan"/>
</dbReference>
<dbReference type="DrugBank" id="DB00970">
    <property type="generic name" value="Dactinomycin"/>
</dbReference>
<dbReference type="DrugBank" id="DB12804">
    <property type="generic name" value="Daniquidone"/>
</dbReference>
<dbReference type="DrugBank" id="DB16138">
    <property type="generic name" value="Diflomotecan"/>
</dbReference>
<dbReference type="DrugBank" id="DB00997">
    <property type="generic name" value="Doxorubicin"/>
</dbReference>
<dbReference type="DrugBank" id="DB17152">
    <property type="generic name" value="DRF-1042"/>
</dbReference>
<dbReference type="DrugBank" id="DB04882">
    <property type="generic name" value="Edotecarin"/>
</dbReference>
<dbReference type="DrugBank" id="DB05129">
    <property type="generic name" value="Elsamitrucin"/>
</dbReference>
<dbReference type="DrugBank" id="DB12185">
    <property type="generic name" value="Exatecan"/>
</dbReference>
<dbReference type="DrugBank" id="DB06721">
    <property type="generic name" value="Gimatecan"/>
</dbReference>
<dbReference type="DrugBank" id="DB11254">
    <property type="generic name" value="Hexylresorcinol"/>
</dbReference>
<dbReference type="DrugBank" id="DB18752">
    <property type="generic name" value="Indotecan"/>
</dbReference>
<dbReference type="DrugBank" id="DB12868">
    <property type="generic name" value="Intoplicine"/>
</dbReference>
<dbReference type="DrugBank" id="DB00762">
    <property type="generic name" value="Irinotecan"/>
</dbReference>
<dbReference type="DrugBank" id="DB11948">
    <property type="generic name" value="Lapachone"/>
</dbReference>
<dbReference type="DrugBank" id="DB17385">
    <property type="generic name" value="Lipotecan"/>
</dbReference>
<dbReference type="DrugBank" id="DB04967">
    <property type="generic name" value="Lucanthone"/>
</dbReference>
<dbReference type="DrugBank" id="DB12222">
    <property type="generic name" value="Lurtotecan"/>
</dbReference>
<dbReference type="DrugBank" id="DB15584">
    <property type="generic name" value="Luteolin"/>
</dbReference>
<dbReference type="DrugBank" id="DB12124">
    <property type="generic name" value="Namitecan"/>
</dbReference>
<dbReference type="DrugBank" id="DB12842">
    <property type="generic name" value="Pegamotecan"/>
</dbReference>
<dbReference type="DrugBank" id="DB16186">
    <property type="generic name" value="PEN-866"/>
</dbReference>
<dbReference type="DrugBank" id="DB06159">
    <property type="generic name" value="Rubitecan"/>
</dbReference>
<dbReference type="DrugBank" id="DB12893">
    <property type="generic name" value="Sacituzumab govitecan"/>
</dbReference>
<dbReference type="DrugBank" id="DB12384">
    <property type="generic name" value="Silatecan"/>
</dbReference>
<dbReference type="DrugBank" id="DB05482">
    <property type="generic name" value="SN-38"/>
</dbReference>
<dbReference type="DrugBank" id="DB05630">
    <property type="generic name" value="Sodium stibogluconate"/>
</dbReference>
<dbReference type="DrugBank" id="DB01030">
    <property type="generic name" value="Topotecan"/>
</dbReference>
<dbReference type="DrugBank" id="DB14962">
    <property type="generic name" value="Trastuzumab deruxtecan"/>
</dbReference>
<dbReference type="DrugBank" id="DB06069">
    <property type="generic name" value="XMT-1001"/>
</dbReference>
<dbReference type="DrugCentral" id="P11387"/>
<dbReference type="GlyGen" id="P11387">
    <property type="glycosylation" value="3 sites, 2 N-linked glycans (2 sites), 1 O-linked glycan (1 site)"/>
</dbReference>
<dbReference type="iPTMnet" id="P11387"/>
<dbReference type="MetOSite" id="P11387"/>
<dbReference type="PhosphoSitePlus" id="P11387"/>
<dbReference type="SwissPalm" id="P11387"/>
<dbReference type="BioMuta" id="TOP1"/>
<dbReference type="DMDM" id="12644118"/>
<dbReference type="jPOST" id="P11387"/>
<dbReference type="MassIVE" id="P11387"/>
<dbReference type="PaxDb" id="9606-ENSP00000354522"/>
<dbReference type="PeptideAtlas" id="P11387"/>
<dbReference type="ProteomicsDB" id="52766"/>
<dbReference type="Pumba" id="P11387"/>
<dbReference type="Antibodypedia" id="3962">
    <property type="antibodies" value="449 antibodies from 44 providers"/>
</dbReference>
<dbReference type="CPTC" id="P11387">
    <property type="antibodies" value="4 antibodies"/>
</dbReference>
<dbReference type="DNASU" id="7150"/>
<dbReference type="Ensembl" id="ENST00000361337.3">
    <property type="protein sequence ID" value="ENSP00000354522.2"/>
    <property type="gene ID" value="ENSG00000198900.7"/>
</dbReference>
<dbReference type="GeneID" id="7150"/>
<dbReference type="KEGG" id="hsa:7150"/>
<dbReference type="MANE-Select" id="ENST00000361337.3">
    <property type="protein sequence ID" value="ENSP00000354522.2"/>
    <property type="RefSeq nucleotide sequence ID" value="NM_003286.4"/>
    <property type="RefSeq protein sequence ID" value="NP_003277.1"/>
</dbReference>
<dbReference type="UCSC" id="uc002xjl.4">
    <property type="organism name" value="human"/>
</dbReference>
<dbReference type="AGR" id="HGNC:11986"/>
<dbReference type="CTD" id="7150"/>
<dbReference type="DisGeNET" id="7150"/>
<dbReference type="GeneCards" id="TOP1"/>
<dbReference type="HGNC" id="HGNC:11986">
    <property type="gene designation" value="TOP1"/>
</dbReference>
<dbReference type="HPA" id="ENSG00000198900">
    <property type="expression patterns" value="Low tissue specificity"/>
</dbReference>
<dbReference type="MalaCards" id="TOP1"/>
<dbReference type="MIM" id="126420">
    <property type="type" value="gene"/>
</dbReference>
<dbReference type="neXtProt" id="NX_P11387"/>
<dbReference type="OpenTargets" id="ENSG00000198900"/>
<dbReference type="PharmGKB" id="PA353"/>
<dbReference type="VEuPathDB" id="HostDB:ENSG00000198900"/>
<dbReference type="eggNOG" id="KOG0981">
    <property type="taxonomic scope" value="Eukaryota"/>
</dbReference>
<dbReference type="GeneTree" id="ENSGT00940000155006"/>
<dbReference type="HOGENOM" id="CLU_009193_0_1_1"/>
<dbReference type="InParanoid" id="P11387"/>
<dbReference type="OMA" id="HRWKEVK"/>
<dbReference type="OrthoDB" id="47179at2759"/>
<dbReference type="PAN-GO" id="P11387">
    <property type="GO annotations" value="5 GO annotations based on evolutionary models"/>
</dbReference>
<dbReference type="PhylomeDB" id="P11387"/>
<dbReference type="TreeFam" id="TF105281"/>
<dbReference type="BRENDA" id="5.6.2.1">
    <property type="organism ID" value="2681"/>
</dbReference>
<dbReference type="BRENDA" id="5.99.1.2">
    <property type="organism ID" value="2681"/>
</dbReference>
<dbReference type="PathwayCommons" id="P11387"/>
<dbReference type="Reactome" id="R-HSA-4615885">
    <property type="pathway name" value="SUMOylation of DNA replication proteins"/>
</dbReference>
<dbReference type="SignaLink" id="P11387"/>
<dbReference type="SIGNOR" id="P11387"/>
<dbReference type="BioGRID-ORCS" id="7150">
    <property type="hits" value="709 hits in 1173 CRISPR screens"/>
</dbReference>
<dbReference type="CD-CODE" id="91857CE7">
    <property type="entry name" value="Nucleolus"/>
</dbReference>
<dbReference type="ChiTaRS" id="TOP1">
    <property type="organism name" value="human"/>
</dbReference>
<dbReference type="EvolutionaryTrace" id="P11387"/>
<dbReference type="GeneWiki" id="TOP1"/>
<dbReference type="GenomeRNAi" id="7150"/>
<dbReference type="Pharos" id="P11387">
    <property type="development level" value="Tclin"/>
</dbReference>
<dbReference type="PRO" id="PR:P11387"/>
<dbReference type="Proteomes" id="UP000005640">
    <property type="component" value="Chromosome 20"/>
</dbReference>
<dbReference type="RNAct" id="P11387">
    <property type="molecule type" value="protein"/>
</dbReference>
<dbReference type="Bgee" id="ENSG00000198900">
    <property type="expression patterns" value="Expressed in oocyte and 189 other cell types or tissues"/>
</dbReference>
<dbReference type="GO" id="GO:0005694">
    <property type="term" value="C:chromosome"/>
    <property type="evidence" value="ECO:0007669"/>
    <property type="project" value="InterPro"/>
</dbReference>
<dbReference type="GO" id="GO:0001651">
    <property type="term" value="C:dense fibrillar component"/>
    <property type="evidence" value="ECO:0007669"/>
    <property type="project" value="Ensembl"/>
</dbReference>
<dbReference type="GO" id="GO:0001650">
    <property type="term" value="C:fibrillar center"/>
    <property type="evidence" value="ECO:0000314"/>
    <property type="project" value="HPA"/>
</dbReference>
<dbReference type="GO" id="GO:0001673">
    <property type="term" value="C:male germ cell nucleus"/>
    <property type="evidence" value="ECO:0007669"/>
    <property type="project" value="Ensembl"/>
</dbReference>
<dbReference type="GO" id="GO:0005730">
    <property type="term" value="C:nucleolus"/>
    <property type="evidence" value="ECO:0000314"/>
    <property type="project" value="UniProtKB"/>
</dbReference>
<dbReference type="GO" id="GO:0005654">
    <property type="term" value="C:nucleoplasm"/>
    <property type="evidence" value="ECO:0000314"/>
    <property type="project" value="UniProtKB"/>
</dbReference>
<dbReference type="GO" id="GO:0005634">
    <property type="term" value="C:nucleus"/>
    <property type="evidence" value="ECO:0000314"/>
    <property type="project" value="UniProtKB"/>
</dbReference>
<dbReference type="GO" id="GO:0000932">
    <property type="term" value="C:P-body"/>
    <property type="evidence" value="ECO:0000314"/>
    <property type="project" value="UniProtKB"/>
</dbReference>
<dbReference type="GO" id="GO:0043204">
    <property type="term" value="C:perikaryon"/>
    <property type="evidence" value="ECO:0007669"/>
    <property type="project" value="Ensembl"/>
</dbReference>
<dbReference type="GO" id="GO:0032993">
    <property type="term" value="C:protein-DNA complex"/>
    <property type="evidence" value="ECO:0000315"/>
    <property type="project" value="CAFA"/>
</dbReference>
<dbReference type="GO" id="GO:0005524">
    <property type="term" value="F:ATP binding"/>
    <property type="evidence" value="ECO:0000315"/>
    <property type="project" value="CAFA"/>
</dbReference>
<dbReference type="GO" id="GO:0003682">
    <property type="term" value="F:chromatin binding"/>
    <property type="evidence" value="ECO:0000314"/>
    <property type="project" value="UniProtKB"/>
</dbReference>
<dbReference type="GO" id="GO:0031490">
    <property type="term" value="F:chromatin DNA binding"/>
    <property type="evidence" value="ECO:0007669"/>
    <property type="project" value="Ensembl"/>
</dbReference>
<dbReference type="GO" id="GO:0003677">
    <property type="term" value="F:DNA binding"/>
    <property type="evidence" value="ECO:0000314"/>
    <property type="project" value="UniProtKB"/>
</dbReference>
<dbReference type="GO" id="GO:0008301">
    <property type="term" value="F:DNA binding, bending"/>
    <property type="evidence" value="ECO:0000269"/>
    <property type="project" value="DisProt"/>
</dbReference>
<dbReference type="GO" id="GO:0003917">
    <property type="term" value="F:DNA topoisomerase type I (single strand cut, ATP-independent) activity"/>
    <property type="evidence" value="ECO:0000314"/>
    <property type="project" value="UniProtKB"/>
</dbReference>
<dbReference type="GO" id="GO:0003690">
    <property type="term" value="F:double-stranded DNA binding"/>
    <property type="evidence" value="ECO:0000315"/>
    <property type="project" value="CAFA"/>
</dbReference>
<dbReference type="GO" id="GO:0019904">
    <property type="term" value="F:protein domain specific binding"/>
    <property type="evidence" value="ECO:0000353"/>
    <property type="project" value="CAFA"/>
</dbReference>
<dbReference type="GO" id="GO:0004674">
    <property type="term" value="F:protein serine/threonine kinase activity"/>
    <property type="evidence" value="ECO:0000315"/>
    <property type="project" value="CAFA"/>
</dbReference>
<dbReference type="GO" id="GO:0044877">
    <property type="term" value="F:protein-containing complex binding"/>
    <property type="evidence" value="ECO:0007669"/>
    <property type="project" value="Ensembl"/>
</dbReference>
<dbReference type="GO" id="GO:0003723">
    <property type="term" value="F:RNA binding"/>
    <property type="evidence" value="ECO:0007005"/>
    <property type="project" value="UniProtKB"/>
</dbReference>
<dbReference type="GO" id="GO:0000978">
    <property type="term" value="F:RNA polymerase II cis-regulatory region sequence-specific DNA binding"/>
    <property type="evidence" value="ECO:0000314"/>
    <property type="project" value="UniProtKB"/>
</dbReference>
<dbReference type="GO" id="GO:0003697">
    <property type="term" value="F:single-stranded DNA binding"/>
    <property type="evidence" value="ECO:0000315"/>
    <property type="project" value="CAFA"/>
</dbReference>
<dbReference type="GO" id="GO:0097100">
    <property type="term" value="F:supercoiled DNA binding"/>
    <property type="evidence" value="ECO:0000315"/>
    <property type="project" value="CAFA"/>
</dbReference>
<dbReference type="GO" id="GO:0031100">
    <property type="term" value="P:animal organ regeneration"/>
    <property type="evidence" value="ECO:0007669"/>
    <property type="project" value="Ensembl"/>
</dbReference>
<dbReference type="GO" id="GO:0071373">
    <property type="term" value="P:cellular response to luteinizing hormone stimulus"/>
    <property type="evidence" value="ECO:0007669"/>
    <property type="project" value="Ensembl"/>
</dbReference>
<dbReference type="GO" id="GO:0006338">
    <property type="term" value="P:chromatin remodeling"/>
    <property type="evidence" value="ECO:0000315"/>
    <property type="project" value="UniProtKB"/>
</dbReference>
<dbReference type="GO" id="GO:0007059">
    <property type="term" value="P:chromosome segregation"/>
    <property type="evidence" value="ECO:0000318"/>
    <property type="project" value="GO_Central"/>
</dbReference>
<dbReference type="GO" id="GO:0032922">
    <property type="term" value="P:circadian regulation of gene expression"/>
    <property type="evidence" value="ECO:0000315"/>
    <property type="project" value="UniProtKB"/>
</dbReference>
<dbReference type="GO" id="GO:0007623">
    <property type="term" value="P:circadian rhythm"/>
    <property type="evidence" value="ECO:0000270"/>
    <property type="project" value="UniProtKB"/>
</dbReference>
<dbReference type="GO" id="GO:0006260">
    <property type="term" value="P:DNA replication"/>
    <property type="evidence" value="ECO:0000318"/>
    <property type="project" value="GO_Central"/>
</dbReference>
<dbReference type="GO" id="GO:0006265">
    <property type="term" value="P:DNA topological change"/>
    <property type="evidence" value="ECO:0000314"/>
    <property type="project" value="UniProtKB"/>
</dbReference>
<dbReference type="GO" id="GO:0040016">
    <property type="term" value="P:embryonic cleavage"/>
    <property type="evidence" value="ECO:0007669"/>
    <property type="project" value="Ensembl"/>
</dbReference>
<dbReference type="GO" id="GO:0018105">
    <property type="term" value="P:peptidyl-serine phosphorylation"/>
    <property type="evidence" value="ECO:0000315"/>
    <property type="project" value="CAFA"/>
</dbReference>
<dbReference type="GO" id="GO:0012501">
    <property type="term" value="P:programmed cell death"/>
    <property type="evidence" value="ECO:0000303"/>
    <property type="project" value="UniProtKB"/>
</dbReference>
<dbReference type="GO" id="GO:0051591">
    <property type="term" value="P:response to cAMP"/>
    <property type="evidence" value="ECO:0007669"/>
    <property type="project" value="Ensembl"/>
</dbReference>
<dbReference type="GO" id="GO:0010332">
    <property type="term" value="P:response to gamma radiation"/>
    <property type="evidence" value="ECO:0007669"/>
    <property type="project" value="Ensembl"/>
</dbReference>
<dbReference type="GO" id="GO:0009266">
    <property type="term" value="P:response to temperature stimulus"/>
    <property type="evidence" value="ECO:0007669"/>
    <property type="project" value="Ensembl"/>
</dbReference>
<dbReference type="GO" id="GO:0009410">
    <property type="term" value="P:response to xenobiotic stimulus"/>
    <property type="evidence" value="ECO:0000270"/>
    <property type="project" value="UniProtKB"/>
</dbReference>
<dbReference type="GO" id="GO:0009303">
    <property type="term" value="P:rRNA transcription"/>
    <property type="evidence" value="ECO:0007669"/>
    <property type="project" value="Ensembl"/>
</dbReference>
<dbReference type="CDD" id="cd00659">
    <property type="entry name" value="Topo_IB_C"/>
    <property type="match status" value="1"/>
</dbReference>
<dbReference type="CDD" id="cd03488">
    <property type="entry name" value="Topoisomer_IB_N_htopoI_like"/>
    <property type="match status" value="1"/>
</dbReference>
<dbReference type="DisProt" id="DP00075"/>
<dbReference type="FunFam" id="1.10.10.41:FF:000001">
    <property type="entry name" value="DNA topoisomerase I"/>
    <property type="match status" value="1"/>
</dbReference>
<dbReference type="FunFam" id="1.10.132.10:FF:000001">
    <property type="entry name" value="DNA topoisomerase I"/>
    <property type="match status" value="1"/>
</dbReference>
<dbReference type="FunFam" id="2.170.11.10:FF:000002">
    <property type="entry name" value="DNA topoisomerase I"/>
    <property type="match status" value="1"/>
</dbReference>
<dbReference type="FunFam" id="3.90.15.10:FF:000001">
    <property type="entry name" value="DNA topoisomerase I"/>
    <property type="match status" value="1"/>
</dbReference>
<dbReference type="Gene3D" id="1.10.132.10">
    <property type="match status" value="1"/>
</dbReference>
<dbReference type="Gene3D" id="2.170.11.10">
    <property type="entry name" value="DNA Topoisomerase I, domain 2"/>
    <property type="match status" value="1"/>
</dbReference>
<dbReference type="Gene3D" id="3.90.15.10">
    <property type="entry name" value="Topoisomerase I, Chain A, domain 3"/>
    <property type="match status" value="1"/>
</dbReference>
<dbReference type="Gene3D" id="1.10.10.41">
    <property type="entry name" value="Yeast DNA topoisomerase - domain 1"/>
    <property type="match status" value="1"/>
</dbReference>
<dbReference type="InterPro" id="IPR011010">
    <property type="entry name" value="DNA_brk_join_enz"/>
</dbReference>
<dbReference type="InterPro" id="IPR013034">
    <property type="entry name" value="DNA_topo_DNA_db_N_dom1"/>
</dbReference>
<dbReference type="InterPro" id="IPR013030">
    <property type="entry name" value="DNA_topo_DNA_db_N_dom2"/>
</dbReference>
<dbReference type="InterPro" id="IPR001631">
    <property type="entry name" value="TopoI"/>
</dbReference>
<dbReference type="InterPro" id="IPR025834">
    <property type="entry name" value="TopoI_C_dom"/>
</dbReference>
<dbReference type="InterPro" id="IPR014711">
    <property type="entry name" value="TopoI_cat_a-hlx-sub_euk"/>
</dbReference>
<dbReference type="InterPro" id="IPR014727">
    <property type="entry name" value="TopoI_cat_a/b-sub_euk"/>
</dbReference>
<dbReference type="InterPro" id="IPR013500">
    <property type="entry name" value="TopoI_cat_euk"/>
</dbReference>
<dbReference type="InterPro" id="IPR008336">
    <property type="entry name" value="TopoI_DNA-bd_euk"/>
</dbReference>
<dbReference type="InterPro" id="IPR036202">
    <property type="entry name" value="TopoI_DNA-bd_euk_N_sf"/>
</dbReference>
<dbReference type="InterPro" id="IPR013499">
    <property type="entry name" value="TopoI_euk"/>
</dbReference>
<dbReference type="InterPro" id="IPR018521">
    <property type="entry name" value="TopoIB_AS"/>
</dbReference>
<dbReference type="InterPro" id="IPR048045">
    <property type="entry name" value="Topoisomer_I_DNA-bd"/>
</dbReference>
<dbReference type="InterPro" id="IPR051062">
    <property type="entry name" value="Topoisomerase_IB"/>
</dbReference>
<dbReference type="PANTHER" id="PTHR10290:SF5">
    <property type="entry name" value="DNA TOPOISOMERASE 1"/>
    <property type="match status" value="1"/>
</dbReference>
<dbReference type="PANTHER" id="PTHR10290">
    <property type="entry name" value="DNA TOPOISOMERASE I"/>
    <property type="match status" value="1"/>
</dbReference>
<dbReference type="Pfam" id="PF14370">
    <property type="entry name" value="Topo_C_assoc"/>
    <property type="match status" value="1"/>
</dbReference>
<dbReference type="Pfam" id="PF01028">
    <property type="entry name" value="Topoisom_I"/>
    <property type="match status" value="1"/>
</dbReference>
<dbReference type="Pfam" id="PF02919">
    <property type="entry name" value="Topoisom_I_N"/>
    <property type="match status" value="1"/>
</dbReference>
<dbReference type="PRINTS" id="PR00416">
    <property type="entry name" value="EUTPISMRASEI"/>
</dbReference>
<dbReference type="SMART" id="SM00435">
    <property type="entry name" value="TOPEUc"/>
    <property type="match status" value="1"/>
</dbReference>
<dbReference type="SUPFAM" id="SSF56349">
    <property type="entry name" value="DNA breaking-rejoining enzymes"/>
    <property type="match status" value="1"/>
</dbReference>
<dbReference type="SUPFAM" id="SSF46596">
    <property type="entry name" value="Eukaryotic DNA topoisomerase I, dispensable insert domain"/>
    <property type="match status" value="1"/>
</dbReference>
<dbReference type="SUPFAM" id="SSF56741">
    <property type="entry name" value="Eukaryotic DNA topoisomerase I, N-terminal DNA-binding fragment"/>
    <property type="match status" value="1"/>
</dbReference>
<dbReference type="PROSITE" id="PS00176">
    <property type="entry name" value="TOPO_IB_1"/>
    <property type="match status" value="1"/>
</dbReference>
<dbReference type="PROSITE" id="PS52038">
    <property type="entry name" value="TOPO_IB_2"/>
    <property type="match status" value="1"/>
</dbReference>